<accession>Q68801</accession>
<organismHost>
    <name type="scientific">Homo sapiens</name>
    <name type="common">Human</name>
    <dbReference type="NCBI Taxonomy" id="9606"/>
</organismHost>
<proteinExistence type="inferred from homology"/>
<comment type="function">
    <molecule>Mature core protein</molecule>
    <text evidence="2 4 5 6 11 20">Packages viral RNA to form a viral nucleocapsid, and promotes virion budding (Probable). Participates in the viral particle production as a result of its interaction with the non-structural protein 5A (By similarity). Binds RNA and may function as a RNA chaperone to induce the RNA structural rearrangements taking place during virus replication (By similarity). Modulates viral translation initiation by interacting with viral IRES and 40S ribosomal subunit (By similarity). Affects various cell signaling pathways, host immunity and lipid metabolism (Probable). Prevents the establishment of cellular antiviral state by blocking the interferon-alpha/beta (IFN-alpha/beta) and IFN-gamma signaling pathways and by blocking the formation of phosphorylated STAT1 and promoting ubiquitin-mediated proteasome-dependent degradation of STAT1 (By similarity). Activates STAT3 leading to cellular transformation (By similarity). Regulates the activity of cellular genes, including c-myc and c-fos (By similarity). May repress the promoter of p53, and sequester CREB3 and SP110 isoform 3/Sp110b in the cytoplasm (By similarity). Represses cell cycle negative regulating factor CDKN1A, thereby interrupting an important check point of normal cell cycle regulation (By similarity). Targets transcription factors involved in the regulation of inflammatory responses and in the immune response: suppresses TNF-induced NF-kappa-B activation, and activates AP-1 (By similarity). Binds to dendritic cells (DCs) via C1QR1, resulting in down-regulation of T-lymphocytes proliferation (By similarity). Alters lipid metabolism by interacting with hepatocellular proteins involved in lipid accumulation and storage (By similarity). Induces up-regulation of FAS promoter activity, and thereby contributes to the increased triglyceride accumulation in hepatocytes (steatosis) (By similarity).</text>
</comment>
<comment type="function">
    <molecule>Envelope glycoprotein E1</molecule>
    <text evidence="5">Forms a heterodimer with envelope glycoprotein E2, which mediates virus attachment to the host cell, virion internalization through clathrin-dependent endocytosis and fusion with host membrane (By similarity). Fusion with the host cell is most likely mediated by both E1 and E2, through conformational rearrangements of the heterodimer required for fusion rather than a classical class II fusion mechanism (By similarity). E1/E2 heterodimer binds host apolipoproteins such as APOB and ApoE thereby forming a lipo-viro-particle (LVP) (By similarity). APOE associated to the LVP allows the initial virus attachment to cell surface receptors such as the heparan sulfate proteoglycans (HSPGs), syndecan-1 (SDC1), syndecan-1 (SDC2), the low-density lipoprotein receptor (LDLR) and scavenger receptor class B type I (SCARB1) (By similarity). The cholesterol transfer activity of SCARB1 allows E2 exposure and binding of E2 to SCARB1 and the tetraspanin CD81 (By similarity). E1/E2 heterodimer binding on CD81 activates the epithelial growth factor receptor (EGFR) signaling pathway (By similarity). Diffusion of the complex E1-E2-EGFR-SCARB1-CD81 to the cell lateral membrane allows further interaction with Claudin 1 (CLDN1) and occludin (OCLN) to finally trigger HCV entry (By similarity).</text>
</comment>
<comment type="function">
    <molecule>Envelope glycoprotein E2</molecule>
    <text evidence="4 5">Forms a heterodimer with envelope glycoprotein E1, which mediates virus attachment to the host cell, virion internalization through clathrin-dependent endocytosis and fusion with host membrane (By similarity). Fusion with the host cell is most likely mediated by both E1 and E2, through conformational rearrangements of the heterodimer required for fusion rather than a classical class II fusion mechanism (By similarity). The interaction between envelope glycoprotein E2 and host apolipoprotein E/APOE allows the proper assembly, maturation and infectivity of the viral particles (By similarity). This interaction is probably promoted via the up-regulation of cellular autophagy by the virus (By similarity). E1/E2 heterodimer binds host apolipoproteins such as APOB and APOE thereby forming a lipo-viro-particle (LVP) (By similarity). APOE associated to the LVP allows the initial virus attachment to cell surface receptors such as the heparan sulfate proteoglycans (HSPGs), syndecan-1 (SDC1), syndecan-1 (SDC2), the low-density lipoprotein receptor (LDLR) and scavenger receptor class B type I (SCARB1) (By similarity). The cholesterol transfer activity of SCARB1 allows E2 exposure and binding of E2 to SCARB1 and the tetraspanin CD81 (By similarity). E1/E2 heterodimer binding on CD81 activates the epithelial growth factor receptor (EGFR) signaling pathway (By similarity). Diffusion of the complex E1-E2-EGFR-SCARB1-CD81 to the cell lateral membrane allows further interaction with Claudin 1 (CLDN1) and occludin (OCLN) to finally trigger HCV entry (By similarity). Inhibits host EIF2AK2/PKR activation, preventing the establishment of an antiviral state (By similarity). Viral ligand for CD209/DC-SIGN and CLEC4M/DC-SIGNR, which are respectively found on dendritic cells (DCs), and on liver sinusoidal endothelial cells and macrophage-like cells of lymph node sinuses (By similarity). These interactions allow the capture of circulating HCV particles by these cells and subsequent facilitated transmission to permissive cells such as hepatocytes and lymphocyte subpopulations (By similarity). The interaction between E2 and host amino acid transporter complex formed by SLC3A2 and SLC7A5/LAT1 may facilitate viral entry into host cell (By similarity).</text>
</comment>
<comment type="function">
    <molecule>Viroporin p7</molecule>
    <text evidence="5 11 20">Ion channel protein that acts as a viroporin and plays an essential role in the assembly, envelopment and secretion of viral particles (By similarity). Regulates the host cell secretory pathway, which induces the intracellular retention of viral glycoproteins and favors assembly of viral particles (By similarity). Creates a pore in acidic organelles and releases Ca(2+) and H(+) in the cytoplasm of infected cells, leading to a productive viral infection (By similarity). High levels of cytoplasmic Ca(2+) may trigger membrane trafficking and transport of viral ER-associated proteins to viroplasms, sites of viral genome replication (Probable). This ionic imbalance induces the assembly of the inflammasome complex, which triggers the maturation of pro-IL-1beta into IL-1beta through the action of caspase-1 (By similarity). Targets also host mitochondria and induces mitochondrial depolarization (By similarity). In addition of its role as a viroporin, acts as a lipid raft adhesion factor (By similarity).</text>
</comment>
<comment type="function">
    <molecule>Protease NS2</molecule>
    <text evidence="3 5">Cysteine protease required for the proteolytic auto-cleavage between the non-structural proteins NS2 and NS3 (By similarity). The N-terminus of NS3 is required for the function of NS2 protease (active region NS2-3) (By similarity). Promotes the initiation of viral particle assembly by mediating the interaction between structural and non-structural proteins (By similarity).</text>
</comment>
<comment type="function">
    <molecule>Serine protease/helicase NS3</molecule>
    <text evidence="5 12">Displays three enzymatic activities: serine protease with a chymotrypsin-like fold, NTPase and RNA helicase (By similarity). NS3 serine protease, in association with NS4A, is responsible for the cleavages of NS3-NS4A, NS4A-NS4B, NS4B-NS5A and NS5A-NS5B (By similarity). The NS3/NS4A complex prevents phosphorylation of host IRF3, thus preventing the establishment of dsRNA induced antiviral state (By similarity). The NS3/NS4A complex induces host amino acid transporter component SLC3A2, thus contributing to HCV propagation (By similarity). NS3 RNA helicase binds to RNA and unwinds both dsDNA and dsRNA in the 3' to 5' direction, and likely resolves RNA complicated stable secondary structures in the template strand (By similarity). Binds a single ATP and catalyzes the unzipping of a single base pair of dsRNA (By similarity). Inhibits host antiviral proteins TBK1 and IRF3 thereby preventing the establishment of an antiviral state (By similarity). Cleaves host MAVS/CARDIF thereby preventing the establishment of an antiviral state (By similarity). Cleaves host TICAM1/TRIF, thereby disrupting TLR3 signaling and preventing the establishment of an antiviral state (By similarity).</text>
</comment>
<comment type="function">
    <molecule>Non-structural protein 4B</molecule>
    <text evidence="5">Induces a specific membrane alteration that serves as a scaffold for the virus replication complex (By similarity). This membrane alteration gives rise to the so-called ER-derived membranous web that contains the replication complex (By similarity). NS4B self-interaction contributes to its function in membranous web formation (By similarity). Promotes host TRIF protein degradation in a CASP8-dependent manner thereby inhibiting host TLR3-mediated interferon signaling (By similarity). Disrupts the interaction between STING and TBK1 contributing to the inhibition of interferon signaling (By similarity).</text>
</comment>
<comment type="function">
    <molecule>Non-structural protein 5A</molecule>
    <text evidence="2 4 5 11 12">Phosphorylated protein that is indispensable for viral replication and assembly (By similarity). Both hypo- and hyperphosphorylated states are required for the viral life cycle (By similarity). The hyperphosphorylated form of NS5A is an inhibitor of viral replication (By similarity). Involved in RNA-binding and especially in binding to the viral genome (By similarity). Zinc is essential for RNA-binding (By similarity). Participates in the viral particle production as a result of its interaction with the mature viral core protein (By similarity). Its interaction with host VAPB may target the viral replication complex to vesicles (By similarity). Down-regulates viral IRES translation initiation (By similarity). Mediates interferon resistance, presumably by interacting with and inhibiting host EIF2AK2/PKR (By similarity). Prevents BIN1-induced apoptosis (By similarity). Acts as a transcriptional activator of some host genes important for viral replication when localized in the nucleus (By similarity). Via the interaction with host PACSIN2, modulates lipid droplet formation in order to promote virion assembly (By similarity). Modulates TNFRSF21/DR6 signaling pathway for viral propagation (By similarity).</text>
</comment>
<comment type="function">
    <molecule>RNA-directed RNA polymerase</molecule>
    <text evidence="5">RNA-dependent RNA polymerase that performs primer-template recognition and RNA synthesis during viral replication. Initiates RNA transcription/replication at a flavin adenine dinucleotide (FAD), resulting in a 5'- FAD cap on viral RNAs. In this way, recognition of viral 5' RNA by host pattern recognition receptors can be bypassed, thereby evading activation of antiviral pathways.</text>
</comment>
<comment type="catalytic activity">
    <molecule>Serine protease/helicase NS3</molecule>
    <reaction evidence="5">
        <text>Hydrolysis of four peptide bonds in the viral precursor polyprotein, commonly with Asp or Glu in the P6 position, Cys or Thr in P1 and Ser or Ala in P1'.</text>
        <dbReference type="EC" id="3.4.21.98"/>
    </reaction>
</comment>
<comment type="catalytic activity">
    <molecule>Serine protease/helicase NS3</molecule>
    <reaction evidence="5">
        <text>a ribonucleoside 5'-triphosphate + H2O = a ribonucleoside 5'-diphosphate + phosphate + H(+)</text>
        <dbReference type="Rhea" id="RHEA:23680"/>
        <dbReference type="ChEBI" id="CHEBI:15377"/>
        <dbReference type="ChEBI" id="CHEBI:15378"/>
        <dbReference type="ChEBI" id="CHEBI:43474"/>
        <dbReference type="ChEBI" id="CHEBI:57930"/>
        <dbReference type="ChEBI" id="CHEBI:61557"/>
        <dbReference type="EC" id="3.6.1.15"/>
    </reaction>
</comment>
<comment type="catalytic activity">
    <molecule>Serine protease/helicase NS3</molecule>
    <reaction evidence="5">
        <text>ATP + H2O = ADP + phosphate + H(+)</text>
        <dbReference type="Rhea" id="RHEA:13065"/>
        <dbReference type="ChEBI" id="CHEBI:15377"/>
        <dbReference type="ChEBI" id="CHEBI:15378"/>
        <dbReference type="ChEBI" id="CHEBI:30616"/>
        <dbReference type="ChEBI" id="CHEBI:43474"/>
        <dbReference type="ChEBI" id="CHEBI:456216"/>
        <dbReference type="EC" id="3.6.4.13"/>
    </reaction>
</comment>
<comment type="catalytic activity">
    <molecule>RNA-directed RNA polymerase</molecule>
    <reaction evidence="14">
        <text>RNA(n) + a ribonucleoside 5'-triphosphate = RNA(n+1) + diphosphate</text>
        <dbReference type="Rhea" id="RHEA:21248"/>
        <dbReference type="Rhea" id="RHEA-COMP:14527"/>
        <dbReference type="Rhea" id="RHEA-COMP:17342"/>
        <dbReference type="ChEBI" id="CHEBI:33019"/>
        <dbReference type="ChEBI" id="CHEBI:61557"/>
        <dbReference type="ChEBI" id="CHEBI:140395"/>
        <dbReference type="EC" id="2.7.7.48"/>
    </reaction>
</comment>
<comment type="cofactor">
    <molecule>Protease NS2</molecule>
    <cofactor evidence="3">
        <name>Zn(2+)</name>
        <dbReference type="ChEBI" id="CHEBI:29105"/>
    </cofactor>
    <text evidence="3">Activity of protease NS2 is dependent on zinc ions and completely inhibited by EDTA. This is probably due to the fact that NS2 protease activity needs NS3 N-terminus that binds a zinc atom (active region NS2-3).</text>
</comment>
<comment type="cofactor">
    <molecule>Serine protease/helicase NS3</molecule>
    <cofactor evidence="3">
        <name>Zn(2+)</name>
        <dbReference type="ChEBI" id="CHEBI:29105"/>
    </cofactor>
    <cofactor evidence="12">
        <name>Mg(2+)</name>
        <dbReference type="ChEBI" id="CHEBI:18420"/>
    </cofactor>
    <text evidence="3 12">Binds 1 zinc ion, which has a structural role (By similarity). The magnesium ion is essential for the helicase activity (By similarity).</text>
</comment>
<comment type="cofactor">
    <molecule>RNA-directed RNA polymerase</molecule>
    <cofactor evidence="3">
        <name>Mg(2+)</name>
        <dbReference type="ChEBI" id="CHEBI:18420"/>
    </cofactor>
    <text evidence="3">Binds 2 magnesium ion that constitute a dinuclear catalytic metal center.</text>
</comment>
<comment type="activity regulation">
    <molecule>Viroporin p7</molecule>
    <text evidence="2 5">Inhibited by the antiviral drug hexamethylene amiloride (By similarity). Inhibition by amantadine appears to be genotype-dependent (By similarity). Also inhibited by long-alkyl-chain iminosugar derivatives (By similarity).</text>
</comment>
<comment type="activity regulation">
    <molecule>RNA-directed RNA polymerase</molecule>
    <text evidence="5">Activity is up-regulated by PRK2/PKN2-mediated phosphorylation.</text>
</comment>
<comment type="subunit">
    <molecule>Mature core protein</molecule>
    <text evidence="2 4 5 6 8 9 11">Homooligomer (By similarity). Interacts with E1 (via C-terminus) (By similarity). Interacts with the non-structural protein 5A (By similarity). Interacts (via N-terminus) with host STAT1 (via SH2 domain); this interaction results in decreased STAT1 phosphorylation and ubiquitin-mediated proteasome-dependent STAT1 degradation, leading to decreased IFN-stimulated gene transcription (By similarity). Interacts with host STAT3; this interaction constitutively activates STAT3 (By similarity). Interacts with host LTBR receptor (By similarity). Interacts with host TNFRSF1A receptor and possibly induces apoptosis (By similarity). Interacts with host HNRPK (By similarity). Interacts with host YWHAE (By similarity). Interacts with host UBE3A/E6AP (By similarity). Interacts with host DDX3X (By similarity). Interacts with host APOA2 (By similarity). Interacts with host RXRA protein (By similarity). Interacts with host SP110 isoform 3/Sp110b; this interaction sequesters the transcriptional corepressor SP110 away from the nucleus (By similarity). Interacts with host CREB3 nuclear transcription protein; this interaction triggers cell transformation (By similarity). Interacts with host ACY3 (By similarity). Interacts with host C1QR1 (By similarity). Interacts with host RBM24; this interaction, which enhances the interaction of the mature core protein with 5'-UTR, may inhibit viral translation and favor replication (By similarity). Interacts with host EIF2AK2/PKR; this interaction induces the autophosphorylation of EIF2AK2 (By similarity). Part of the viral assembly initiation complex composed of NS2, E1, E2, NS3, NS4A, NS5A and the mature core protein (By similarity).</text>
</comment>
<comment type="subunit">
    <molecule>Envelope glycoprotein E1</molecule>
    <text evidence="5 11">Forms a heterodimer with envelope glycoprotein E2 (By similarity). Interacts with mature core protein (By similarity). Interacts with protease NS2 (By similarity). The heterodimer E1/E2 interacts with host CLDN1; this interaction plays a role in viral entry into host cell (By similarity). Interacts with host SPSB2 (via C-terminus) (By similarity). Part of the viral assembly initiation complex composed of NS2, E1, E2, NS3, NS4A, NS5A and the mature core protein (By similarity). Interacts with host NEURL3; this interaction prevents E1 binding to glycoprotein E2 (By similarity).</text>
</comment>
<comment type="subunit">
    <molecule>Envelope glycoprotein E2</molecule>
    <text evidence="5 11 12">Forms a heterodimer with envelope glycoprotein E1 (By similarity). Interacts with host CD81 and SCARB1 receptors; these interactions play a role in viral entry into host cell (By similarity). Interacts with host EIF2AK2/PKR; this interaction inhibits EIF2AK2 and probably allows the virus to evade the innate immune response (By similarity). Interacts with host CD209/DC-SIGN and CLEC4M/DC-SIGNR (By similarity). Interact with host SPCS1; this interaction is essential for viral particle assembly (By similarity). Interacts with protease NS2 (By similarity). The heterodimer E1/E2 interacts with host CLDN1; this interaction plays a role in viral entry into host cell (By similarity). Part of the viral assembly initiation complex composed of NS2, E1, E2, NS3, NS4A, NS5A and the mature core protein (By similarity). Interacts with host SLC3A2/4F2hc; the interaction may facilitate viral entry into host cell (By similarity). Interacts with human PLSCR1 (By similarity).</text>
</comment>
<comment type="subunit">
    <molecule>Viroporin p7</molecule>
    <text evidence="1 5 11">Homohexamer (By similarity). Homoheptamer (By similarity). Interacts with protease NS2 (By similarity).</text>
</comment>
<comment type="subunit">
    <molecule>Protease NS2</molecule>
    <text evidence="5 11">Homodimer (By similarity). Interacts with host SPCS1; this interaction is essential for viral particle assembly (By similarity). Interacts with envelope glycoprotein E1 (By similarity). Interacts with envelope glycoprotein E2 (By similarity). Interacts with viroporin p7 (By similarity). Interacts with serine protease/helicase NS3 (By similarity). Part of the replication complex composed of NS2, NS3, NS4A, NS4B, NS5A and the RNA-directed RNA polymerase embedded in an ER-derived membranous web (By similarity). Part of the viral assembly initiation complex composed of NS2, E1, E2, NS3, NS4A, NS5A and the mature core protein (By similarity).</text>
</comment>
<comment type="subunit">
    <molecule>Serine protease/helicase NS3</molecule>
    <text evidence="3 5 11 12">Interacts with protease NS2 (By similarity). Interacts with non-structural protein 4A; this interaction stabilizes the folding of NS3 serine protease (By similarity). NS3-NS4A interaction is essential for NS3 activation and allows membrane anchorage of the latter (By similarity). NS3/NS4A complex also prevents phosphorylation of host IRF3, thus preventing the establishment of dsRNA induced antiviral state (By similarity). Interacts with host MAVS; this interaction leads to the cleavage and inhibition of host MAVS (By similarity). Interacts with host TICAM1; this interaction leads to the cleavage and inhibition of host TICAM1 (By similarity). Interacts with host TANK-binding kinase/TBK1; this interaction results in the inhibition of the association between TBK1 and IRF3, which leads to the inhibition of IRF3 activation (By similarity). Interacts with host RBM24 (By similarity). Part of the replication complex composed of NS2, NS3, NS4A, NS4B, NS5A and the RNA-directed RNA polymerase embedded in an ER-derived membranous web (By similarity). Part of the viral assembly initiation complex composed of NS2, E1, E2, NS3, NS4A, NS5A and the mature core protein (By similarity).</text>
</comment>
<comment type="subunit">
    <molecule>Non-structural protein 4A</molecule>
    <text evidence="2 3 5 11">Interacts with NS3 serine protease; this interaction stabilizes the folding of NS3 serine protease (By similarity). NS3-NS4A interaction is essential for NS3 activation and allows membrane anchorage of the latter (By similarity). Interacts with non-structural protein 5A (via N-terminus) (By similarity). Part of the replication complex composed of NS2, NS3, NS4A, NS4B, NS5A and the RNA-directed RNA polymerase embedded in an ER-derived membranous web (By similarity). Part of the viral assembly initiation complex composed of NS2, E1, E2, NS3, NS4A, NS5A and the mature core protein (By similarity).</text>
</comment>
<comment type="subunit">
    <molecule>Non-structural protein 4B</molecule>
    <text evidence="5 11">Homomultimer (By similarity). Interacts with non-structural protein NS5A (By similarity). Interacts with host PLA2G4C; this interaction likely initiates the recruitment of replication complexes to lipid droplets (By similarity). Interacts with host STING; this interaction disrupts the interaction between STING and TBK1 thereby suppressing the interferon signaling (By similarity). Part of the replication complex composed of NS2, NS3, NS4A, NS4B, NS5A and the RNA-directed RNA polymerase embedded in an ER-derived membranous web (By similarity).</text>
</comment>
<comment type="subunit">
    <molecule>Non-structural protein 5A</molecule>
    <text evidence="2 3 4 5 11">Monomer. Homodimer; dimerization is required for RNA-binding (By similarity). Interacts with the mature core protein (By similarity). Interacts (via N-terminus) with non-structural protein 4A (By similarity). Interacts with non-structural protein 4B. Interacts (via region D2) with RNA-directed RNA polymerase (By similarity). Part of the viral assembly initiation complex composed of NS2, E1, E2, NS3, NS4A, NS5A and the mature core protein (By similarity). Part of the replication complex composed of NS2, NS3, NS4A, NS4B, NS5A and the RNA-directed RNA polymerase embedded in an ER-derived membranous web (By similarity). Interacts with host GRB2 (By similarity). Interacts with host BIN1 (By similarity). Interacts with host PIK3R1 (By similarity). Interacts with host SRCAP (By similarity). Interacts with host FKBP8 (By similarity). Interacts (via C-terminus) with host VAPB (via MSP domain). Interacts with host EIF2AK2/PKR; this interaction leads to disruption of EIF2AK2 dimerization by NS5A and probably allows the virus to evade the innate immune response. Interacts (via N-terminus) with host PACSIN2 (via N-terminus); this interaction attenuates protein kinase C alpha-mediated phosphorylation of PACSIN2 by disrupting the interaction between PACSIN2 and PRKCA (By similarity). Interacts (via N-terminus) with host SRC kinase (via SH2 domain) (By similarity). Interacts with most Src-family kinases (By similarity). Interacts with host IFI27 and SKP2; promotes the ubiquitin-mediated proteasomal degradation of NS5A (By similarity). Interacts with host GPS2 (By similarity). Interacts with host TNFRSF21; this interaction allows the modulation by the virus of JNK, p38 MAPK, STAT3, and Akt signaling pathways in a DR6-dependent manner. Interacts (via N-terminus) with host CIDEB (via N-terminus); this interaction seems to regulate the association of HCV particles with APOE (By similarity). Interacts with host CHKA/Choline Kinase-alpha; CHKA bridges host PI4KA and NS5A and potentiates NS5A-stimulated PI4KA activity, which then facilitates the targeting of the ternary complex to the ER for viral replication (By similarity). Interacts with host SPSB2 (via C-terminus); this interaction targets NS5A for ubiquitination and degradation (By similarity). Interacts with host RAB18; this interaction may promote the association of NS5A and other replicase components with lipid droplets (By similarity). Interacts (via region D2) with host PPIA/CYPA; the interaction stimulates RNA-binding ability of NS5A and is dependent on the peptidyl-prolyl cis-trans isomerase activity of PPIA/CYPA. Interacts with host TRIM14; this interaction induces the degradation of NS5A (By similarity).</text>
</comment>
<comment type="subunit">
    <molecule>RNA-directed RNA polymerase</molecule>
    <text evidence="5">Homooligomer (By similarity). Interacts with non-structural protein 5A (By similarity). Interacts with host VAPB (By similarity). Interacts with host PRK2/PKN2 (By similarity). Interacts with host HNRNPA1 and SEPT6; these interactions facilitate viral replication (By similarity). Part of the replication complex composed of NS2, NS3, NS4A, NS4B, NS5A and the RNA-directed RNA polymerase (By similarity).</text>
</comment>
<comment type="subcellular location">
    <molecule>Core protein precursor</molecule>
    <subcellularLocation>
        <location evidence="4">Host endoplasmic reticulum membrane</location>
        <topology evidence="13">Single-pass membrane protein</topology>
    </subcellularLocation>
    <subcellularLocation>
        <location evidence="4">Host mitochondrion membrane</location>
        <topology evidence="13">Single-pass type I membrane protein</topology>
    </subcellularLocation>
    <text>The C-terminal transmembrane domain of the core protein precursor contains an ER signal leading the nascent polyprotein to the ER membrane.</text>
</comment>
<comment type="subcellular location">
    <molecule>Mature core protein</molecule>
    <subcellularLocation>
        <location evidence="11">Virion</location>
    </subcellularLocation>
    <subcellularLocation>
        <location evidence="11">Host cytoplasm</location>
    </subcellularLocation>
    <subcellularLocation>
        <location evidence="2">Host nucleus</location>
    </subcellularLocation>
    <subcellularLocation>
        <location evidence="11">Host lipid droplet</location>
    </subcellularLocation>
    <text evidence="5">Only a minor proportion of core protein is present in the nucleus (By similarity). Probably present on the surface of lipid droplets (By similarity).</text>
</comment>
<comment type="subcellular location">
    <molecule>Envelope glycoprotein E1</molecule>
    <subcellularLocation>
        <location evidence="20">Virion membrane</location>
        <topology evidence="20">Single-pass type I membrane protein</topology>
    </subcellularLocation>
    <subcellularLocation>
        <location>Host endoplasmic reticulum membrane</location>
        <topology evidence="5">Single-pass type I membrane protein</topology>
    </subcellularLocation>
    <text evidence="5">The C-terminal transmembrane domain acts as a signal sequence and forms a hairpin structure before cleavage by host signal peptidase (By similarity). After cleavage, the membrane sequence is retained at the C-terminus of the protein, serving as ER membrane anchor (By similarity). A reorientation of the second hydrophobic stretch occurs after cleavage producing a single reoriented transmembrane domain (By similarity). These events explain the final topology of the protein (By similarity).</text>
</comment>
<comment type="subcellular location">
    <molecule>Envelope glycoprotein E2</molecule>
    <subcellularLocation>
        <location evidence="20">Virion membrane</location>
        <topology evidence="20">Single-pass type I membrane protein</topology>
    </subcellularLocation>
    <subcellularLocation>
        <location>Host endoplasmic reticulum membrane</location>
        <topology evidence="5">Single-pass type I membrane protein</topology>
    </subcellularLocation>
    <subcellularLocation>
        <location evidence="12">Host lipid droplet</location>
    </subcellularLocation>
    <text evidence="5">The C-terminal transmembrane domain acts as a signal sequence and forms a hairpin structure before cleavage by host signal peptidase (By similarity). After cleavage, the membrane sequence is retained at the C-terminus of the protein, serving as ER membrane anchor (By similarity). A reorientation of the second hydrophobic stretch occurs after cleavage producing a single reoriented transmembrane domain (By similarity). These events explain the final topology of the protein (By similarity).</text>
</comment>
<comment type="subcellular location">
    <molecule>Viroporin p7</molecule>
    <subcellularLocation>
        <location evidence="5">Host endoplasmic reticulum membrane</location>
        <topology evidence="5">Multi-pass membrane protein</topology>
    </subcellularLocation>
    <subcellularLocation>
        <location evidence="5">Host mitochondrion</location>
    </subcellularLocation>
    <subcellularLocation>
        <location evidence="5">Host cell membrane</location>
    </subcellularLocation>
    <text evidence="5">The C-terminus of p7 membrane domain acts as a signal sequence (By similarity). After cleavage by host signal peptidase, the membrane sequence is retained at the C-terminus of the protein, serving as ER membrane anchor (By similarity). ER retention of p7 is leaky and a small fraction reaches the plasma membrane (By similarity).</text>
</comment>
<comment type="subcellular location">
    <molecule>Protease NS2</molecule>
    <subcellularLocation>
        <location evidence="5">Host endoplasmic reticulum membrane</location>
        <topology evidence="5">Multi-pass membrane protein</topology>
    </subcellularLocation>
    <subcellularLocation>
        <location evidence="12">Host lipid droplet</location>
    </subcellularLocation>
    <text evidence="11">Probably present on the surface of lipid droplets.</text>
</comment>
<comment type="subcellular location">
    <molecule>Serine protease/helicase NS3</molecule>
    <subcellularLocation>
        <location evidence="20">Host endoplasmic reticulum membrane</location>
        <topology evidence="20">Peripheral membrane protein</topology>
    </subcellularLocation>
    <text evidence="20">NS3 is associated to the ER membrane through its binding to NS4A.</text>
</comment>
<comment type="subcellular location">
    <molecule>Non-structural protein 4A</molecule>
    <subcellularLocation>
        <location evidence="20">Host endoplasmic reticulum membrane</location>
        <topology evidence="20">Single-pass type I membrane protein</topology>
    </subcellularLocation>
    <text>Host membrane insertion occurs after processing by the NS3 protease.</text>
</comment>
<comment type="subcellular location">
    <molecule>Non-structural protein 4B</molecule>
    <subcellularLocation>
        <location evidence="5">Host endoplasmic reticulum membrane</location>
        <topology evidence="5">Multi-pass membrane protein</topology>
    </subcellularLocation>
    <text evidence="5">A reorientation of the N-terminus into the ER lumen occurs post-translationally.</text>
</comment>
<comment type="subcellular location">
    <molecule>Non-structural protein 5A</molecule>
    <subcellularLocation>
        <location evidence="5">Host endoplasmic reticulum membrane</location>
        <topology evidence="5">Peripheral membrane protein</topology>
    </subcellularLocation>
    <subcellularLocation>
        <location evidence="5">Host cytoplasm</location>
        <location evidence="5">Host perinuclear region</location>
    </subcellularLocation>
    <subcellularLocation>
        <location evidence="2">Host mitochondrion</location>
    </subcellularLocation>
    <subcellularLocation>
        <location evidence="5">Host cytoplasm</location>
    </subcellularLocation>
    <subcellularLocation>
        <location evidence="2">Host nucleus</location>
    </subcellularLocation>
    <subcellularLocation>
        <location evidence="12">Host lipid droplet</location>
    </subcellularLocation>
    <text evidence="2 5">Host membrane insertion occurs after processing by the NS3 protease (By similarity). Localizes at the surface of lipid droplets (By similarity).</text>
</comment>
<comment type="subcellular location">
    <molecule>RNA-directed RNA polymerase</molecule>
    <subcellularLocation>
        <location evidence="5">Host cytoplasm</location>
    </subcellularLocation>
    <subcellularLocation>
        <location>Host endoplasmic reticulum membrane</location>
        <topology evidence="5">Single-pass type IV membrane protein</topology>
    </subcellularLocation>
    <text evidence="5">Host membrane insertion occurs after processing by the NS3 protease.</text>
</comment>
<comment type="domain">
    <molecule>Envelope glycoprotein E1</molecule>
    <text evidence="5">The transmembrane regions of envelope E1 and E2 glycoproteins are involved in heterodimer formation, ER localization, and assembly of these proteins.</text>
</comment>
<comment type="domain">
    <molecule>Envelope glycoprotein E2</molecule>
    <text evidence="3 5">The transmembrane regions of envelope E1 and E2 glycoproteins are involved in heterodimer formation, ER localization, and assembly of these proteins (By similarity). Envelope E2 glycoprotein contain two highly variable regions called hypervariable region 1 and 2 (HVR1 and HVR2) (By similarity). E2 also contain two segments involved in CD81-binding (By similarity). HVR1 is implicated in the SCARB1-mediated cell entry and probably acts as a regulator of the association of particles with lipids (By similarity).</text>
</comment>
<comment type="domain">
    <molecule>Protease NS2</molecule>
    <text evidence="3">The N-terminus of NS3 is required for the catalytic activity of protease NS2 (By similarity). The minimal catalytic region includes the C-terminus of NS2 and the N-terminus NS3 protease domain (active region NS2-3) (By similarity).</text>
</comment>
<comment type="domain">
    <molecule>Serine protease/helicase NS3</molecule>
    <text evidence="2 5">The N-terminal one-third contains the protease activity (By similarity). This region contains a zinc atom that does not belong to the active site, but may play a structural rather than a catalytic role (By similarity). This region is essential for the activity of protease NS2, maybe by contributing to the folding of the latter (By similarity). The NTPase/helicase activity is located in the twothirds C-terminus of NS3, this domain contains the NTPase and RNA-binding regions (By similarity).</text>
</comment>
<comment type="domain">
    <molecule>Non-structural protein 4B</molecule>
    <text evidence="11">Contains a glycine zipper region that critically contributes to the biogenesis of functional ER-derived replication organelles.</text>
</comment>
<comment type="domain">
    <molecule>Non-structural protein 5A</molecule>
    <text evidence="2 5">The N-terminus of NS5A acts as membrane anchor (By similarity). The central part of NS5A contains a variable region called interferon sensitivity determining region (ISDR) and seems to be intrinsically disordered and interacts with NS5B and host EIF2AK2 (By similarity). The C-terminus of NS5A contains a variable region called variable region 3 (V3) (By similarity). ISDR and V3 may be involved in sensitivity and/or resistance to IFN-alpha therapy (By similarity). The C-terminus contains a nuclear localization signal (By similarity). The SH3-binding domain is involved in the interaction with host BIN1, GRB2 and Src-family kinases (By similarity).</text>
</comment>
<comment type="PTM">
    <molecule>Genome polyprotein</molecule>
    <text evidence="4 5">Specific enzymatic cleavages in vivo yield mature proteins (By similarity). The structural proteins, core, E1, E2 and p7 are produced by proteolytic processing by host signal peptidases (By similarity). The core protein precursor is synthesized as a 23 kDa, which is retained in the ER membrane through the hydrophobic signal peptide (By similarity). Cleavage by the signal peptidase releases the 21 kDa mature core protein (By similarity). The cleavage of the core protein precursor occurs between aminoacids 176 and 188 but the exact cleavage site is not known (By similarity). Some degraded forms of the core protein appear as well during the course of infection (By similarity). The other proteins (p7, NS2, NS3, NS4A, NS4B, NS5A and NS5B) are cleaved by the viral proteases (By similarity). Autoprocessing between NS2 and NS3 is mediated by the NS2 cysteine protease catalytic domain and regulated by the NS3 N-terminal domain (By similarity).</text>
</comment>
<comment type="PTM">
    <molecule>Mature core protein</molecule>
    <text evidence="7">Phosphorylated by host PKC and PKA.</text>
</comment>
<comment type="PTM">
    <molecule>Mature core protein</molecule>
    <text evidence="8">Ubiquitinated; mediated by UBE3A and leading to core protein subsequent proteasomal degradation.</text>
</comment>
<comment type="PTM">
    <molecule>Envelope glycoprotein E1</molecule>
    <text evidence="5">Highly N-glycosylated.</text>
</comment>
<comment type="PTM">
    <molecule>Envelope glycoprotein E2</molecule>
    <text evidence="5">Highly N-glycosylated.</text>
</comment>
<comment type="PTM">
    <molecule>Protease NS2</molecule>
    <text evidence="5">Palmitoylation is required for NS2/3 autoprocessing and E2 recruitment to membranes.</text>
</comment>
<comment type="PTM">
    <molecule>Non-structural protein 4B</molecule>
    <text evidence="5">Palmitoylated. This modification may play a role in its polymerization or in protein-protein interactions.</text>
</comment>
<comment type="PTM">
    <molecule>Non-structural protein 5A</molecule>
    <text evidence="2 4">Phosphorylated on serines in a basal form termed p56 (By similarity). p58 is a hyperphosphorylated form of p56 (By similarity). p56 and p58 coexist in the cell in roughly equivalent amounts (By similarity). Hyperphosphorylation is dependent on the presence of NS4A (By similarity). Host CSNK1A1/CKI-alpha or RPS6KB1 kinases may be responsible for NS5A phosphorylation (By similarity).</text>
</comment>
<comment type="PTM">
    <molecule>Non-structural protein 5A</molecule>
    <text evidence="11">Tyrosine phosphorylation is essential for the interaction with host SRC.</text>
</comment>
<comment type="PTM">
    <molecule>Non-structural protein 5A</molecule>
    <text evidence="5">Ubiquitinated (By similarity). Ubiquitination, most probably at Lys-2355, mediated by host IFI27 and SKP2 leads to proteasomal degradation, restricting viral infection (By similarity). Ubiquitination by host TRIM22 leads to interruption of viral replication (By similarity).</text>
</comment>
<comment type="PTM">
    <molecule>RNA-directed RNA polymerase</molecule>
    <text evidence="2">The N-terminus is phosphorylated by host PRK2/PKN2.</text>
</comment>
<comment type="miscellaneous">
    <text evidence="20">Viral particle assembly takes place at the surface of ER-derived membranes in close proximity to lipid droplets. NS2 associates with E1/E2 glycoproteins, NS3 and NS5A, which interacts with the viral RNA and core protein to promote genome encapsidation. The nucleocapsid buds at the ER membrane where E1/E2 glycoproteins are anchored and afterward associate with nascent lipid droplet to acquire APOE and APOC. Secretion of viral particles is probably regulated by viroporin p7.</text>
</comment>
<comment type="miscellaneous">
    <molecule>Non-structural protein 5A</molecule>
    <text evidence="20">Cell culture adaptation of the virus leads to mutations in NS5A, reducing its inhibitory effect on replication.</text>
</comment>
<comment type="miscellaneous">
    <molecule>Mature core protein</molecule>
    <text evidence="2">Exerts viral interference on hepatitis B virus when HCV and HBV coinfect the same cell, by suppressing HBV gene expression, RNA encapsidation and budding.</text>
</comment>
<comment type="similarity">
    <text evidence="20">Belongs to the hepacivirus polyprotein family.</text>
</comment>
<comment type="caution">
    <text evidence="20">The core gene probably also codes for alternative reading frame proteins (ARFPs). Many functions depicted for the core protein might belong to the ARFPs.</text>
</comment>
<keyword id="KW-0007">Acetylation</keyword>
<keyword id="KW-1072">Activation of host autophagy by virus</keyword>
<keyword id="KW-0053">Apoptosis</keyword>
<keyword id="KW-0067">ATP-binding</keyword>
<keyword id="KW-0167">Capsid protein</keyword>
<keyword id="KW-1165">Clathrin-mediated endocytosis of virus by host</keyword>
<keyword id="KW-1015">Disulfide bond</keyword>
<keyword id="KW-1170">Fusion of virus membrane with host endosomal membrane</keyword>
<keyword id="KW-1168">Fusion of virus membrane with host membrane</keyword>
<keyword id="KW-1078">G1/S host cell cycle checkpoint dysregulation by virus</keyword>
<keyword id="KW-0325">Glycoprotein</keyword>
<keyword id="KW-0347">Helicase</keyword>
<keyword id="KW-1032">Host cell membrane</keyword>
<keyword id="KW-1035">Host cytoplasm</keyword>
<keyword id="KW-1038">Host endoplasmic reticulum</keyword>
<keyword id="KW-1041">Host lipid droplet</keyword>
<keyword id="KW-1043">Host membrane</keyword>
<keyword id="KW-1045">Host mitochondrion</keyword>
<keyword id="KW-1048">Host nucleus</keyword>
<keyword id="KW-0945">Host-virus interaction</keyword>
<keyword id="KW-0378">Hydrolase</keyword>
<keyword id="KW-1090">Inhibition of host innate immune response by virus</keyword>
<keyword id="KW-1114">Inhibition of host interferon signaling pathway by virus</keyword>
<keyword id="KW-1097">Inhibition of host MAVS by virus</keyword>
<keyword id="KW-1113">Inhibition of host RLR pathway by virus</keyword>
<keyword id="KW-1105">Inhibition of host STAT1 by virus</keyword>
<keyword id="KW-1110">Inhibition of host TRAFs by virus</keyword>
<keyword id="KW-0922">Interferon antiviral system evasion</keyword>
<keyword id="KW-0407">Ion channel</keyword>
<keyword id="KW-0406">Ion transport</keyword>
<keyword id="KW-1017">Isopeptide bond</keyword>
<keyword id="KW-0449">Lipoprotein</keyword>
<keyword id="KW-0460">Magnesium</keyword>
<keyword id="KW-0472">Membrane</keyword>
<keyword id="KW-0479">Metal-binding</keyword>
<keyword id="KW-1121">Modulation of host cell cycle by virus</keyword>
<keyword id="KW-0511">Multifunctional enzyme</keyword>
<keyword id="KW-0547">Nucleotide-binding</keyword>
<keyword id="KW-0548">Nucleotidyltransferase</keyword>
<keyword id="KW-0553">Oncogene</keyword>
<keyword id="KW-0564">Palmitate</keyword>
<keyword id="KW-0597">Phosphoprotein</keyword>
<keyword id="KW-0645">Protease</keyword>
<keyword id="KW-0687">Ribonucleoprotein</keyword>
<keyword id="KW-0694">RNA-binding</keyword>
<keyword id="KW-0696">RNA-directed RNA polymerase</keyword>
<keyword id="KW-0720">Serine protease</keyword>
<keyword id="KW-0729">SH3-binding</keyword>
<keyword id="KW-0788">Thiol protease</keyword>
<keyword id="KW-0804">Transcription</keyword>
<keyword id="KW-0805">Transcription regulation</keyword>
<keyword id="KW-0808">Transferase</keyword>
<keyword id="KW-0812">Transmembrane</keyword>
<keyword id="KW-1133">Transmembrane helix</keyword>
<keyword id="KW-0813">Transport</keyword>
<keyword id="KW-0832">Ubl conjugation</keyword>
<keyword id="KW-1161">Viral attachment to host cell</keyword>
<keyword id="KW-0261">Viral envelope protein</keyword>
<keyword id="KW-0899">Viral immunoevasion</keyword>
<keyword id="KW-1182">Viral ion channel</keyword>
<keyword id="KW-0543">Viral nucleoprotein</keyword>
<keyword id="KW-1162">Viral penetration into host cytoplasm</keyword>
<keyword id="KW-0693">Viral RNA replication</keyword>
<keyword id="KW-0946">Virion</keyword>
<keyword id="KW-1164">Virus endocytosis by host</keyword>
<keyword id="KW-1160">Virus entry into host cell</keyword>
<keyword id="KW-0862">Zinc</keyword>
<reference key="1">
    <citation type="journal article" date="1996" name="J. Gen. Virol.">
        <title>Hepatitis C virus variants from Jakarta, Indonesia classifiable into novel genotypes in the second (2e and 2f), tenth (10a) and eleventh (11a) genetic groups.</title>
        <authorList>
            <person name="Tokita H."/>
            <person name="Okamoto H."/>
            <person name="Iizuka H."/>
            <person name="Kishimoto J."/>
            <person name="Tsuda F."/>
            <person name="Lesmana L.A."/>
            <person name="Miyakawa Y."/>
            <person name="Mayumi M."/>
        </authorList>
    </citation>
    <scope>NUCLEOTIDE SEQUENCE [GENOMIC RNA]</scope>
</reference>
<reference key="2">
    <citation type="journal article" date="2000" name="J. Viral Hepat.">
        <title>Properties of the hepatitis C virus core protein: a structural protein that modulates cellular processes.</title>
        <authorList>
            <person name="McLauchlan J."/>
        </authorList>
    </citation>
    <scope>REVIEW</scope>
</reference>
<reference key="3">
    <citation type="journal article" date="2004" name="Hepatology">
        <title>Structural biology of hepatitis C virus.</title>
        <authorList>
            <person name="Penin F."/>
            <person name="Dubuisson J."/>
            <person name="Rey F.A."/>
            <person name="Moradpour D."/>
            <person name="Pawlotsky J.-M."/>
        </authorList>
    </citation>
    <scope>REVIEW</scope>
</reference>
<dbReference type="EC" id="3.4.22.-" evidence="3"/>
<dbReference type="EC" id="3.4.21.98" evidence="5"/>
<dbReference type="EC" id="3.6.1.15" evidence="5"/>
<dbReference type="EC" id="3.6.4.13" evidence="5"/>
<dbReference type="EC" id="2.7.7.48" evidence="5"/>
<dbReference type="EMBL" id="D63821">
    <property type="protein sequence ID" value="BAA09890.1"/>
    <property type="molecule type" value="Genomic_RNA"/>
</dbReference>
<dbReference type="SMR" id="Q68801"/>
<dbReference type="MEROPS" id="C18.001"/>
<dbReference type="euHCVdb" id="D63821"/>
<dbReference type="Proteomes" id="UP000002692">
    <property type="component" value="Genome"/>
</dbReference>
<dbReference type="GO" id="GO:0044167">
    <property type="term" value="C:host cell endoplasmic reticulum membrane"/>
    <property type="evidence" value="ECO:0007669"/>
    <property type="project" value="UniProtKB-SubCell"/>
</dbReference>
<dbReference type="GO" id="GO:0044186">
    <property type="term" value="C:host cell lipid droplet"/>
    <property type="evidence" value="ECO:0007669"/>
    <property type="project" value="UniProtKB-SubCell"/>
</dbReference>
<dbReference type="GO" id="GO:0044191">
    <property type="term" value="C:host cell mitochondrial membrane"/>
    <property type="evidence" value="ECO:0007669"/>
    <property type="project" value="UniProtKB-SubCell"/>
</dbReference>
<dbReference type="GO" id="GO:0042025">
    <property type="term" value="C:host cell nucleus"/>
    <property type="evidence" value="ECO:0007669"/>
    <property type="project" value="UniProtKB-SubCell"/>
</dbReference>
<dbReference type="GO" id="GO:0044220">
    <property type="term" value="C:host cell perinuclear region of cytoplasm"/>
    <property type="evidence" value="ECO:0007669"/>
    <property type="project" value="UniProtKB-SubCell"/>
</dbReference>
<dbReference type="GO" id="GO:0020002">
    <property type="term" value="C:host cell plasma membrane"/>
    <property type="evidence" value="ECO:0007669"/>
    <property type="project" value="UniProtKB-SubCell"/>
</dbReference>
<dbReference type="GO" id="GO:0016020">
    <property type="term" value="C:membrane"/>
    <property type="evidence" value="ECO:0007669"/>
    <property type="project" value="UniProtKB-KW"/>
</dbReference>
<dbReference type="GO" id="GO:1990904">
    <property type="term" value="C:ribonucleoprotein complex"/>
    <property type="evidence" value="ECO:0007669"/>
    <property type="project" value="UniProtKB-KW"/>
</dbReference>
<dbReference type="GO" id="GO:0019031">
    <property type="term" value="C:viral envelope"/>
    <property type="evidence" value="ECO:0007669"/>
    <property type="project" value="UniProtKB-KW"/>
</dbReference>
<dbReference type="GO" id="GO:0019013">
    <property type="term" value="C:viral nucleocapsid"/>
    <property type="evidence" value="ECO:0007669"/>
    <property type="project" value="UniProtKB-KW"/>
</dbReference>
<dbReference type="GO" id="GO:0055036">
    <property type="term" value="C:virion membrane"/>
    <property type="evidence" value="ECO:0007669"/>
    <property type="project" value="UniProtKB-SubCell"/>
</dbReference>
<dbReference type="GO" id="GO:0005524">
    <property type="term" value="F:ATP binding"/>
    <property type="evidence" value="ECO:0007669"/>
    <property type="project" value="UniProtKB-KW"/>
</dbReference>
<dbReference type="GO" id="GO:0016887">
    <property type="term" value="F:ATP hydrolysis activity"/>
    <property type="evidence" value="ECO:0007669"/>
    <property type="project" value="RHEA"/>
</dbReference>
<dbReference type="GO" id="GO:0015267">
    <property type="term" value="F:channel activity"/>
    <property type="evidence" value="ECO:0007669"/>
    <property type="project" value="UniProtKB-KW"/>
</dbReference>
<dbReference type="GO" id="GO:0004197">
    <property type="term" value="F:cysteine-type endopeptidase activity"/>
    <property type="evidence" value="ECO:0007669"/>
    <property type="project" value="InterPro"/>
</dbReference>
<dbReference type="GO" id="GO:0003723">
    <property type="term" value="F:RNA binding"/>
    <property type="evidence" value="ECO:0007669"/>
    <property type="project" value="UniProtKB-KW"/>
</dbReference>
<dbReference type="GO" id="GO:0003724">
    <property type="term" value="F:RNA helicase activity"/>
    <property type="evidence" value="ECO:0007669"/>
    <property type="project" value="UniProtKB-EC"/>
</dbReference>
<dbReference type="GO" id="GO:0003968">
    <property type="term" value="F:RNA-directed RNA polymerase activity"/>
    <property type="evidence" value="ECO:0007669"/>
    <property type="project" value="UniProtKB-KW"/>
</dbReference>
<dbReference type="GO" id="GO:0004252">
    <property type="term" value="F:serine-type endopeptidase activity"/>
    <property type="evidence" value="ECO:0007669"/>
    <property type="project" value="InterPro"/>
</dbReference>
<dbReference type="GO" id="GO:0017124">
    <property type="term" value="F:SH3 domain binding"/>
    <property type="evidence" value="ECO:0007669"/>
    <property type="project" value="UniProtKB-KW"/>
</dbReference>
<dbReference type="GO" id="GO:0005198">
    <property type="term" value="F:structural molecule activity"/>
    <property type="evidence" value="ECO:0007669"/>
    <property type="project" value="InterPro"/>
</dbReference>
<dbReference type="GO" id="GO:0008270">
    <property type="term" value="F:zinc ion binding"/>
    <property type="evidence" value="ECO:0007669"/>
    <property type="project" value="InterPro"/>
</dbReference>
<dbReference type="GO" id="GO:0075512">
    <property type="term" value="P:clathrin-dependent endocytosis of virus by host cell"/>
    <property type="evidence" value="ECO:0007669"/>
    <property type="project" value="UniProtKB-KW"/>
</dbReference>
<dbReference type="GO" id="GO:0039654">
    <property type="term" value="P:fusion of virus membrane with host endosome membrane"/>
    <property type="evidence" value="ECO:0007669"/>
    <property type="project" value="UniProtKB-KW"/>
</dbReference>
<dbReference type="GO" id="GO:0034220">
    <property type="term" value="P:monoatomic ion transmembrane transport"/>
    <property type="evidence" value="ECO:0007669"/>
    <property type="project" value="UniProtKB-KW"/>
</dbReference>
<dbReference type="GO" id="GO:0006508">
    <property type="term" value="P:proteolysis"/>
    <property type="evidence" value="ECO:0007669"/>
    <property type="project" value="UniProtKB-KW"/>
</dbReference>
<dbReference type="GO" id="GO:0039520">
    <property type="term" value="P:symbiont-mediated activation of host autophagy"/>
    <property type="evidence" value="ECO:0007669"/>
    <property type="project" value="UniProtKB-KW"/>
</dbReference>
<dbReference type="GO" id="GO:0039645">
    <property type="term" value="P:symbiont-mediated perturbation of host cell cycle G1/S transition checkpoint"/>
    <property type="evidence" value="ECO:0007669"/>
    <property type="project" value="UniProtKB-KW"/>
</dbReference>
<dbReference type="GO" id="GO:0039545">
    <property type="term" value="P:symbiont-mediated suppression of host cytoplasmic pattern recognition receptor signaling pathway via inhibition of MAVS activity"/>
    <property type="evidence" value="ECO:0007669"/>
    <property type="project" value="UniProtKB-KW"/>
</dbReference>
<dbReference type="GO" id="GO:0039563">
    <property type="term" value="P:symbiont-mediated suppression of host JAK-STAT cascade via inhibition of STAT1 activity"/>
    <property type="evidence" value="ECO:0007669"/>
    <property type="project" value="UniProtKB-KW"/>
</dbReference>
<dbReference type="GO" id="GO:0039527">
    <property type="term" value="P:symbiont-mediated suppression of host TRAF-mediated signal transduction"/>
    <property type="evidence" value="ECO:0007669"/>
    <property type="project" value="UniProtKB-KW"/>
</dbReference>
<dbReference type="GO" id="GO:0039502">
    <property type="term" value="P:symbiont-mediated suppression of host type I interferon-mediated signaling pathway"/>
    <property type="evidence" value="ECO:0007669"/>
    <property type="project" value="UniProtKB-KW"/>
</dbReference>
<dbReference type="GO" id="GO:0019087">
    <property type="term" value="P:symbiont-mediated transformation of host cell"/>
    <property type="evidence" value="ECO:0007669"/>
    <property type="project" value="InterPro"/>
</dbReference>
<dbReference type="GO" id="GO:0039694">
    <property type="term" value="P:viral RNA genome replication"/>
    <property type="evidence" value="ECO:0007669"/>
    <property type="project" value="InterPro"/>
</dbReference>
<dbReference type="GO" id="GO:0019062">
    <property type="term" value="P:virion attachment to host cell"/>
    <property type="evidence" value="ECO:0007669"/>
    <property type="project" value="UniProtKB-KW"/>
</dbReference>
<dbReference type="CDD" id="cd20903">
    <property type="entry name" value="HCV_p7"/>
    <property type="match status" value="1"/>
</dbReference>
<dbReference type="CDD" id="cd23202">
    <property type="entry name" value="Hepacivirus_RdRp"/>
    <property type="match status" value="1"/>
</dbReference>
<dbReference type="FunFam" id="3.30.160.890:FF:000001">
    <property type="entry name" value="Genome polyprotein"/>
    <property type="match status" value="1"/>
</dbReference>
<dbReference type="FunFam" id="3.30.70.270:FF:000015">
    <property type="entry name" value="Genome polyprotein"/>
    <property type="match status" value="1"/>
</dbReference>
<dbReference type="FunFam" id="3.40.50.300:FF:000557">
    <property type="entry name" value="Genome polyprotein"/>
    <property type="match status" value="1"/>
</dbReference>
<dbReference type="FunFam" id="3.40.50.300:FF:000717">
    <property type="entry name" value="Genome polyprotein"/>
    <property type="match status" value="1"/>
</dbReference>
<dbReference type="Gene3D" id="2.40.10.120">
    <property type="match status" value="1"/>
</dbReference>
<dbReference type="Gene3D" id="3.30.70.270">
    <property type="match status" value="2"/>
</dbReference>
<dbReference type="Gene3D" id="6.10.250.1610">
    <property type="match status" value="1"/>
</dbReference>
<dbReference type="Gene3D" id="6.10.250.1750">
    <property type="match status" value="1"/>
</dbReference>
<dbReference type="Gene3D" id="6.10.250.2920">
    <property type="match status" value="1"/>
</dbReference>
<dbReference type="Gene3D" id="2.20.25.210">
    <property type="entry name" value="Hepatitis C NS5A, domain 1B"/>
    <property type="match status" value="1"/>
</dbReference>
<dbReference type="Gene3D" id="4.10.710.10">
    <property type="entry name" value="Hepatitis C Virus Capsid Protein, Chain A"/>
    <property type="match status" value="1"/>
</dbReference>
<dbReference type="Gene3D" id="3.30.160.890">
    <property type="entry name" value="Hepatitis C virus envelope glycoprotein E1, chain C"/>
    <property type="match status" value="1"/>
</dbReference>
<dbReference type="Gene3D" id="2.30.30.710">
    <property type="entry name" value="Hepatitis C virus non-structural protein NS2, C-terminal domain"/>
    <property type="match status" value="1"/>
</dbReference>
<dbReference type="Gene3D" id="1.20.1280.150">
    <property type="entry name" value="Hepatitis C virus non-structural protein NS2, N-terminal domain"/>
    <property type="match status" value="1"/>
</dbReference>
<dbReference type="Gene3D" id="2.20.25.220">
    <property type="entry name" value="Hepatitis C virus NS5A, 1B domain"/>
    <property type="match status" value="1"/>
</dbReference>
<dbReference type="Gene3D" id="3.40.50.300">
    <property type="entry name" value="P-loop containing nucleotide triphosphate hydrolases"/>
    <property type="match status" value="2"/>
</dbReference>
<dbReference type="Gene3D" id="1.10.820.10">
    <property type="entry name" value="RNA Helicase Chain A , domain 3"/>
    <property type="match status" value="1"/>
</dbReference>
<dbReference type="Gene3D" id="2.40.10.10">
    <property type="entry name" value="Trypsin-like serine proteases"/>
    <property type="match status" value="1"/>
</dbReference>
<dbReference type="InterPro" id="IPR043502">
    <property type="entry name" value="DNA/RNA_pol_sf"/>
</dbReference>
<dbReference type="InterPro" id="IPR011492">
    <property type="entry name" value="Flavi_DEAD"/>
</dbReference>
<dbReference type="InterPro" id="IPR002521">
    <property type="entry name" value="HCV_Core_C"/>
</dbReference>
<dbReference type="InterPro" id="IPR044896">
    <property type="entry name" value="HCV_core_chain_A"/>
</dbReference>
<dbReference type="InterPro" id="IPR002522">
    <property type="entry name" value="HCV_core_N"/>
</dbReference>
<dbReference type="InterPro" id="IPR002519">
    <property type="entry name" value="HCV_Env"/>
</dbReference>
<dbReference type="InterPro" id="IPR002531">
    <property type="entry name" value="HCV_NS1"/>
</dbReference>
<dbReference type="InterPro" id="IPR002518">
    <property type="entry name" value="HCV_NS2"/>
</dbReference>
<dbReference type="InterPro" id="IPR042205">
    <property type="entry name" value="HCV_NS2_C"/>
</dbReference>
<dbReference type="InterPro" id="IPR042209">
    <property type="entry name" value="HCV_NS2_N"/>
</dbReference>
<dbReference type="InterPro" id="IPR000745">
    <property type="entry name" value="HCV_NS4a"/>
</dbReference>
<dbReference type="InterPro" id="IPR001490">
    <property type="entry name" value="HCV_NS4b"/>
</dbReference>
<dbReference type="InterPro" id="IPR002868">
    <property type="entry name" value="HCV_NS5a"/>
</dbReference>
<dbReference type="InterPro" id="IPR013192">
    <property type="entry name" value="HCV_NS5A_1a"/>
</dbReference>
<dbReference type="InterPro" id="IPR013193">
    <property type="entry name" value="HCV_NS5a_1B_dom"/>
</dbReference>
<dbReference type="InterPro" id="IPR038568">
    <property type="entry name" value="HCV_NS5A_1B_sf"/>
</dbReference>
<dbReference type="InterPro" id="IPR024350">
    <property type="entry name" value="HCV_NS5a_C"/>
</dbReference>
<dbReference type="InterPro" id="IPR049913">
    <property type="entry name" value="HCV_p7"/>
</dbReference>
<dbReference type="InterPro" id="IPR014001">
    <property type="entry name" value="Helicase_ATP-bd"/>
</dbReference>
<dbReference type="InterPro" id="IPR001650">
    <property type="entry name" value="Helicase_C-like"/>
</dbReference>
<dbReference type="InterPro" id="IPR004109">
    <property type="entry name" value="HepC_NS3_protease"/>
</dbReference>
<dbReference type="InterPro" id="IPR054175">
    <property type="entry name" value="NS3_helicase_C"/>
</dbReference>
<dbReference type="InterPro" id="IPR038170">
    <property type="entry name" value="NS5A_1a_sf"/>
</dbReference>
<dbReference type="InterPro" id="IPR027417">
    <property type="entry name" value="P-loop_NTPase"/>
</dbReference>
<dbReference type="InterPro" id="IPR009003">
    <property type="entry name" value="Peptidase_S1_PA"/>
</dbReference>
<dbReference type="InterPro" id="IPR043504">
    <property type="entry name" value="Peptidase_S1_PA_chymotrypsin"/>
</dbReference>
<dbReference type="InterPro" id="IPR043128">
    <property type="entry name" value="Rev_trsase/Diguanyl_cyclase"/>
</dbReference>
<dbReference type="InterPro" id="IPR007094">
    <property type="entry name" value="RNA-dir_pol_PSvirus"/>
</dbReference>
<dbReference type="InterPro" id="IPR002166">
    <property type="entry name" value="RNA_pol_HCV"/>
</dbReference>
<dbReference type="Pfam" id="PF07652">
    <property type="entry name" value="Flavi_DEAD"/>
    <property type="match status" value="1"/>
</dbReference>
<dbReference type="Pfam" id="PF01543">
    <property type="entry name" value="HCV_capsid"/>
    <property type="match status" value="1"/>
</dbReference>
<dbReference type="Pfam" id="PF01542">
    <property type="entry name" value="HCV_core"/>
    <property type="match status" value="1"/>
</dbReference>
<dbReference type="Pfam" id="PF01539">
    <property type="entry name" value="HCV_env"/>
    <property type="match status" value="1"/>
</dbReference>
<dbReference type="Pfam" id="PF01560">
    <property type="entry name" value="HCV_NS1"/>
    <property type="match status" value="1"/>
</dbReference>
<dbReference type="Pfam" id="PF01538">
    <property type="entry name" value="HCV_NS2"/>
    <property type="match status" value="1"/>
</dbReference>
<dbReference type="Pfam" id="PF01006">
    <property type="entry name" value="HCV_NS4a"/>
    <property type="match status" value="1"/>
</dbReference>
<dbReference type="Pfam" id="PF01001">
    <property type="entry name" value="HCV_NS4b"/>
    <property type="match status" value="1"/>
</dbReference>
<dbReference type="Pfam" id="PF01506">
    <property type="entry name" value="HCV_NS5a"/>
    <property type="match status" value="1"/>
</dbReference>
<dbReference type="Pfam" id="PF08300">
    <property type="entry name" value="HCV_NS5a_1a"/>
    <property type="match status" value="1"/>
</dbReference>
<dbReference type="Pfam" id="PF08301">
    <property type="entry name" value="HCV_NS5a_1b"/>
    <property type="match status" value="1"/>
</dbReference>
<dbReference type="Pfam" id="PF12941">
    <property type="entry name" value="HCV_NS5a_C"/>
    <property type="match status" value="1"/>
</dbReference>
<dbReference type="Pfam" id="PF22027">
    <property type="entry name" value="NS3_helicase_C"/>
    <property type="match status" value="1"/>
</dbReference>
<dbReference type="Pfam" id="PF02907">
    <property type="entry name" value="Peptidase_S29"/>
    <property type="match status" value="1"/>
</dbReference>
<dbReference type="Pfam" id="PF00998">
    <property type="entry name" value="RdRP_3"/>
    <property type="match status" value="1"/>
</dbReference>
<dbReference type="SMART" id="SM00487">
    <property type="entry name" value="DEXDc"/>
    <property type="match status" value="1"/>
</dbReference>
<dbReference type="SUPFAM" id="SSF56672">
    <property type="entry name" value="DNA/RNA polymerases"/>
    <property type="match status" value="1"/>
</dbReference>
<dbReference type="SUPFAM" id="SSF52540">
    <property type="entry name" value="P-loop containing nucleoside triphosphate hydrolases"/>
    <property type="match status" value="2"/>
</dbReference>
<dbReference type="SUPFAM" id="SSF50494">
    <property type="entry name" value="Trypsin-like serine proteases"/>
    <property type="match status" value="1"/>
</dbReference>
<dbReference type="PROSITE" id="PS51693">
    <property type="entry name" value="HCV_NS2_PRO"/>
    <property type="match status" value="1"/>
</dbReference>
<dbReference type="PROSITE" id="PS51192">
    <property type="entry name" value="HELICASE_ATP_BIND_1"/>
    <property type="match status" value="1"/>
</dbReference>
<dbReference type="PROSITE" id="PS51194">
    <property type="entry name" value="HELICASE_CTER"/>
    <property type="match status" value="1"/>
</dbReference>
<dbReference type="PROSITE" id="PS51822">
    <property type="entry name" value="HV_PV_NS3_PRO"/>
    <property type="match status" value="1"/>
</dbReference>
<dbReference type="PROSITE" id="PS50507">
    <property type="entry name" value="RDRP_SSRNA_POS"/>
    <property type="match status" value="1"/>
</dbReference>
<protein>
    <recommendedName>
        <fullName>Genome polyprotein</fullName>
    </recommendedName>
    <component>
        <recommendedName>
            <fullName>Core protein precursor</fullName>
        </recommendedName>
        <alternativeName>
            <fullName>Capsid protein C</fullName>
        </alternativeName>
        <alternativeName>
            <fullName>p23</fullName>
        </alternativeName>
    </component>
    <component>
        <recommendedName>
            <fullName>Mature core protein</fullName>
        </recommendedName>
        <alternativeName>
            <fullName>p21</fullName>
        </alternativeName>
    </component>
    <component>
        <recommendedName>
            <fullName>Envelope glycoprotein E1</fullName>
        </recommendedName>
        <alternativeName>
            <fullName>gp32</fullName>
        </alternativeName>
        <alternativeName>
            <fullName>gp35</fullName>
        </alternativeName>
    </component>
    <component>
        <recommendedName>
            <fullName>Envelope glycoprotein E2</fullName>
        </recommendedName>
        <alternativeName>
            <fullName>NS1</fullName>
        </alternativeName>
        <alternativeName>
            <fullName>gp68</fullName>
        </alternativeName>
        <alternativeName>
            <fullName>gp70</fullName>
        </alternativeName>
    </component>
    <component>
        <recommendedName>
            <fullName>Viroporin p7</fullName>
        </recommendedName>
    </component>
    <component>
        <recommendedName>
            <fullName>Protease NS2</fullName>
            <shortName>p23</shortName>
            <ecNumber evidence="3">3.4.22.-</ecNumber>
        </recommendedName>
        <alternativeName>
            <fullName>Non-structural protein 2</fullName>
            <shortName>NS2</shortName>
        </alternativeName>
    </component>
    <component>
        <recommendedName>
            <fullName>Serine protease/helicase NS3</fullName>
            <ecNumber evidence="5">3.4.21.98</ecNumber>
            <ecNumber evidence="5">3.6.1.15</ecNumber>
            <ecNumber evidence="5">3.6.4.13</ecNumber>
        </recommendedName>
        <alternativeName>
            <fullName>Hepacivirin</fullName>
        </alternativeName>
        <alternativeName>
            <fullName evidence="5">NS3 helicase</fullName>
        </alternativeName>
        <alternativeName>
            <fullName evidence="5">NS3 protease</fullName>
        </alternativeName>
        <alternativeName>
            <fullName>NS3P</fullName>
        </alternativeName>
        <alternativeName>
            <fullName>Viroporin p70</fullName>
        </alternativeName>
    </component>
    <component>
        <recommendedName>
            <fullName>Non-structural protein 4A</fullName>
            <shortName>NS4A</shortName>
        </recommendedName>
        <alternativeName>
            <fullName>p8</fullName>
        </alternativeName>
    </component>
    <component>
        <recommendedName>
            <fullName>Non-structural protein 4B</fullName>
            <shortName>NS4B</shortName>
        </recommendedName>
        <alternativeName>
            <fullName>p27</fullName>
        </alternativeName>
    </component>
    <component>
        <recommendedName>
            <fullName>Non-structural protein 5A</fullName>
            <shortName>NS5A</shortName>
        </recommendedName>
        <alternativeName>
            <fullName>p56/58</fullName>
        </alternativeName>
    </component>
    <component>
        <recommendedName>
            <fullName>RNA-directed RNA polymerase</fullName>
            <ecNumber evidence="5">2.7.7.48</ecNumber>
        </recommendedName>
        <alternativeName>
            <fullName>NS5B</fullName>
        </alternativeName>
        <alternativeName>
            <fullName>p68</fullName>
        </alternativeName>
    </component>
</protein>
<sequence>MSTLPKPQRITKRNINRRPQDVKFPGGGQIVGGVYVLPRRGPKLGVRAVRKTSERSQPRSRRQPIPRARRTEGRSWAQPGYPWPLYGNEGCGWAGWLLSPRGSRPSWGPNDPRRRSRNLGKVIDTLTCGFADLMGYIPLVGAPVGGVARALAHGVRALEDGINFATGNLPGCSFSIFLLALLSCLLTPTAGLEYRNASGLYTVTNDCSNGSIVYEAGDVILHLPGCIPCVRLNNASKCWTPVSPTVAVSRPGAATASLRTHVDMMVGAATLCSALYVGDLCGALFLVGQGFSWRHRQHWTVQDCNCSIYPGHLTGHRMAWDMMMNWSPAMTLIVSQVLRLPQTMFDLVIGAHWGVMAGVAYYSMQGNWAKVFLVLCLFSGVDASTTITGGVAASGAFTITSLFSTGAKQPLHLVNTNGSWHINRTALNCNDSLNTGFIAGLLYYHKFNSSGCVERMSACSPLDRFAQGWGPLGPANISGPSSEKPYCWHYAPRPCDTVPAQSVCGPVYCFTPSPVVVGATDKRGAPTYTWGENESDVFLLESARPPTEPWFGCTWMNGSGYVKTCGAPPCHIYGGREGKSNNSLVCPTDCFRKHPDATYNRCGAGPWLTPRCLVDYPYRLWHYPCTVNYTIFKVRMFVGGLEHRFNAACNWTRGERCNLEDRDRSEMYPLLHSTTEQAILPCSFVPIPALSTGLIHLHQNIVDVQYLYGISSGLVGWAIKWEFVILIFLLLADARVCVVLWMMMLISQAEAALENLIVLNAISAAGTHGIWWSLVAFCVAWHVRGRIFPIAVYSIVGLWPLLLLVLMLPYRAYAWTGTDTSTLGAGVLSLFALFTLSPWYKHWIARLIWWNQYTIARCEAALQIWVPPLLARGARDGIILLAGLFYPALVFDITKLLLAILGPLYILQASLVRVPYFVRAHAVVRLCILVRNITGGKYVQMVLLALARGFNTYLYDHLSPMTDWAAEGLKDLAVAVEPVIFSPMEVKVITWGADTTACGDILCGLPVSARLGKEVLLGPADDYRSMGWRLLAPITAHAQQTRGLFGTIVTSLTGRDKNIVTGEIQVLSTSTQTFLGTSVGGVMWTVYHGAGSRTLAGNKRPALQMYTNVDQDLVGWPSPPGAKSLVPCTCGSADLYLITRDADVLPARRRGDSTASLLSPRPLACLKGSSGGPIMCPSGHVAGIFRAAVCTRGVAKALQFIPVESLSAQTRSPSFSDNSTPPAVPQTFQVGYLHAPTGSGESTKVPASYVAQGYTVLVLNPSVAATLGFGRFMSHAYGIDPNVRTGTRTITTGAKLTYSTYGKFLADGGCSGGAYDVIICDECHAQDATSILGIGTVLDQAETAGARLVVLATATPPGSITVPHSNIEEVALTGEGEIPFYGRAIPLGVIKGGRHLIFCHSKKKCDELAKQLTSLGVNAVAFYRGLDVSVIPTQGDVVVCATDALITGYTGDFDSVIDCNVAVEQYVDFSLDPTFSIETHTVPQDAVSRSQRRGRTGRGKSGTYRYVSPGERPSGMFDSVVLCECYDAGCAWYELTPSETTVRLRAYLSTPGLPVCQDHLEFWEGVFTGLTHIDAHFLSQTKQQGLNFPYLTAYQATVCARAAALPPSWDETWKCLIRLKPTLHGPTPLLYRLGAVQNEICTTHPVTKYIATCMAADLEVATSAWVLLGGVMAALTAYCLSVGSVVIVGHLVLGGKPALVPDKEVLYQQYDEMEECSRAAPYIEQAQGIAQQFKEKVIGLLQQADQKAADIKPIATPYWQKLETFWSKHMWNFVSGIQYLAGLSTLPGNPAIASLMAFTASVTSPLTTNQTLLFNIMGGWVASNLAPPPASTAFVVSGLAGAAVGSIGLGKVLLDILAGYGAGVAGALVAFKIMGGEMPSTEDMVNLLPAILSPGALVVGVICAAILRRHVGPGEGAVQWMNRLIAFASRGNHVAPTHYVPESDAAAKVTALLSSLTVTQLLRRLHQWINEDYPTPCDGNWLYDIWNWVCTVLADFKLWLGAKILPKMPGIPFLSCQKGYRGTWRGDGVVSTRCPCGALLSGHVKNGTMRLVGPRWCANTWHGTFPINGYTTGPSTPAPSYAYSRALWRVASDSYVEVRKVGDFHYVTGTTDDGLKCPCQVPLPEFFTELDGVRLHRYAPVCRPLLRDDVTFTVGLNSYVIGSQLPCEPEPDVAVVTSMLQDPSHITVETAKRRLDRGSPPSLASSSASQLSAPSRKATCTTHGRHPDAELITANLLWRQEMGSNITRVESESKVVILDSFEPLRACDDEDELSVAAECFKKPPKYPPALPIWARPDYNPPLVEPWKDPDYVPPTVHGCALPPQKLPPVPPPRRKRTIVLSESTVSKALASLAEKSFPQPTCSAEDESTSGVGTQSGSLTGPVQLDDDDSDNESHSSMPPLEGEPGDPDLSSGSWSTVSGEEQSVVCCSMSYSWTGALITPCAAEEEKLPISPLSNSLLRHHNLVYSTSSRSAAQRQKKVTFDRLQVLDDHYNTTLKEIKELASGVKAELLSVEEACRLVPSHSARSKFGYGAKEVRSLSSKAINHINSVWEDLLEDNTTPIPTTIMAKNEVFAVAPHKGGRKPARLIVYPDLGVRICEKRALYDVIQKLPSAIMGSAYGFQYSPKQRVEYLLKMWNSKKTPLGFSYDTRCFDSTVTEQDIRVEESIYQACDLKDEARRVITSLTERLYCGGPMFNSKGQHCGYRRCRASGVLPTSFGNTVTCYLKAKAATKAAGIKDPSFLVCGDDLVVIAESAGIDEDKSALRAFTEAMTRYSAPPGDPPQPTYDLELITSCSSNVSVAHDGAGKRYYYLTRDPETPLARAAWETARHTPVNSWLGNIIMYAPTIWVRMVIMTHFFSILQAQEQLEKALDFEMYGAVYSVTPLDLPAIIERLHGLSAFSLHSYSPVELNRVAGALRKLGIPPLRAWRHRARAVRAKLISQGGKAKICGLYLFNWAVRTKAKLTPLPQAGLLDLSRWFTVGAGGNDIYHSVSRARSRHLLLGLLLLTVGVGIFLLPAR</sequence>
<name>POLG_HCVJK</name>
<evidence type="ECO:0000250" key="1">
    <source>
        <dbReference type="UniProtKB" id="O92972"/>
    </source>
</evidence>
<evidence type="ECO:0000250" key="2">
    <source>
        <dbReference type="UniProtKB" id="P26662"/>
    </source>
</evidence>
<evidence type="ECO:0000250" key="3">
    <source>
        <dbReference type="UniProtKB" id="P26663"/>
    </source>
</evidence>
<evidence type="ECO:0000250" key="4">
    <source>
        <dbReference type="UniProtKB" id="P26664"/>
    </source>
</evidence>
<evidence type="ECO:0000250" key="5">
    <source>
        <dbReference type="UniProtKB" id="P27958"/>
    </source>
</evidence>
<evidence type="ECO:0000250" key="6">
    <source>
        <dbReference type="UniProtKB" id="P29846"/>
    </source>
</evidence>
<evidence type="ECO:0000250" key="7">
    <source>
        <dbReference type="UniProtKB" id="Q01403"/>
    </source>
</evidence>
<evidence type="ECO:0000250" key="8">
    <source>
        <dbReference type="UniProtKB" id="Q03463"/>
    </source>
</evidence>
<evidence type="ECO:0000250" key="9">
    <source>
        <dbReference type="UniProtKB" id="Q5EG65"/>
    </source>
</evidence>
<evidence type="ECO:0000250" key="10">
    <source>
        <dbReference type="UniProtKB" id="Q913V3"/>
    </source>
</evidence>
<evidence type="ECO:0000250" key="11">
    <source>
        <dbReference type="UniProtKB" id="Q99IB8"/>
    </source>
</evidence>
<evidence type="ECO:0000250" key="12">
    <source>
        <dbReference type="UniProtKB" id="Q9WMX2"/>
    </source>
</evidence>
<evidence type="ECO:0000255" key="13"/>
<evidence type="ECO:0000255" key="14">
    <source>
        <dbReference type="PROSITE-ProRule" id="PRU00539"/>
    </source>
</evidence>
<evidence type="ECO:0000255" key="15">
    <source>
        <dbReference type="PROSITE-ProRule" id="PRU00541"/>
    </source>
</evidence>
<evidence type="ECO:0000255" key="16">
    <source>
        <dbReference type="PROSITE-ProRule" id="PRU00542"/>
    </source>
</evidence>
<evidence type="ECO:0000255" key="17">
    <source>
        <dbReference type="PROSITE-ProRule" id="PRU01030"/>
    </source>
</evidence>
<evidence type="ECO:0000255" key="18">
    <source>
        <dbReference type="PROSITE-ProRule" id="PRU01166"/>
    </source>
</evidence>
<evidence type="ECO:0000256" key="19">
    <source>
        <dbReference type="SAM" id="MobiDB-lite"/>
    </source>
</evidence>
<evidence type="ECO:0000305" key="20"/>
<feature type="initiator methionine" description="Removed; by host" evidence="4">
    <location>
        <position position="1"/>
    </location>
</feature>
<feature type="chain" id="PRO_0000450917" description="Genome polyprotein">
    <location>
        <begin position="2"/>
        <end position="3019"/>
    </location>
</feature>
<feature type="chain" id="PRO_0000045604" description="Core protein precursor">
    <location>
        <begin position="2"/>
        <end position="191"/>
    </location>
</feature>
<feature type="chain" id="PRO_0000045605" description="Mature core protein">
    <location>
        <begin position="2"/>
        <end position="177"/>
    </location>
</feature>
<feature type="propeptide" id="PRO_0000045606" description="ER anchor for the core protein, removed in mature form by host signal peptidase">
    <location>
        <begin position="178"/>
        <end position="191"/>
    </location>
</feature>
<feature type="chain" id="PRO_0000045607" description="Envelope glycoprotein E1">
    <location>
        <begin position="192"/>
        <end position="383"/>
    </location>
</feature>
<feature type="chain" id="PRO_0000045608" description="Envelope glycoprotein E2">
    <location>
        <begin position="384"/>
        <end position="751"/>
    </location>
</feature>
<feature type="chain" id="PRO_0000045609" description="Viroporin p7">
    <location>
        <begin position="752"/>
        <end position="814"/>
    </location>
</feature>
<feature type="chain" id="PRO_0000045610" description="Protease NS2" evidence="17">
    <location>
        <begin position="815"/>
        <end position="1031"/>
    </location>
</feature>
<feature type="chain" id="PRO_0000045611" description="Serine protease/helicase NS3">
    <location>
        <begin position="1032"/>
        <end position="1662"/>
    </location>
</feature>
<feature type="chain" id="PRO_0000045612" description="Non-structural protein 4A">
    <location>
        <begin position="1663"/>
        <end position="1716"/>
    </location>
</feature>
<feature type="chain" id="PRO_0000045613" description="Non-structural protein 4B">
    <location>
        <begin position="1717"/>
        <end position="1977"/>
    </location>
</feature>
<feature type="chain" id="PRO_0000045614" description="Non-structural protein 5A">
    <location>
        <begin position="1978"/>
        <end position="2428"/>
    </location>
</feature>
<feature type="chain" id="PRO_0000045615" description="RNA-directed RNA polymerase">
    <location>
        <begin position="2429"/>
        <end position="3019"/>
    </location>
</feature>
<feature type="topological domain" description="Cytoplasmic" evidence="13">
    <location>
        <begin position="2"/>
        <end position="168"/>
    </location>
</feature>
<feature type="transmembrane region" description="Helical" evidence="13">
    <location>
        <begin position="169"/>
        <end position="189"/>
    </location>
</feature>
<feature type="topological domain" description="Lumenal" evidence="5">
    <location>
        <begin position="190"/>
        <end position="358"/>
    </location>
</feature>
<feature type="transmembrane region" description="Helical" evidence="5">
    <location>
        <begin position="359"/>
        <end position="379"/>
    </location>
</feature>
<feature type="topological domain" description="Lumenal" evidence="5">
    <location>
        <begin position="380"/>
        <end position="730"/>
    </location>
</feature>
<feature type="transmembrane region" description="Helical" evidence="5">
    <location>
        <begin position="731"/>
        <end position="751"/>
    </location>
</feature>
<feature type="topological domain" description="Lumenal" evidence="5">
    <location>
        <begin position="752"/>
        <end position="762"/>
    </location>
</feature>
<feature type="transmembrane region" description="Helical" evidence="5">
    <location>
        <begin position="763"/>
        <end position="783"/>
    </location>
</feature>
<feature type="topological domain" description="Cytoplasmic" evidence="5">
    <location>
        <begin position="784"/>
        <end position="786"/>
    </location>
</feature>
<feature type="transmembrane region" description="Helical" evidence="5">
    <location>
        <begin position="787"/>
        <end position="808"/>
    </location>
</feature>
<feature type="topological domain" description="Lumenal" evidence="5">
    <location>
        <begin position="809"/>
        <end position="818"/>
    </location>
</feature>
<feature type="transmembrane region" description="Helical" evidence="12">
    <location>
        <begin position="819"/>
        <end position="839"/>
    </location>
</feature>
<feature type="topological domain" description="Cytoplasmic" evidence="12">
    <location>
        <begin position="840"/>
        <end position="843"/>
    </location>
</feature>
<feature type="transmembrane region" description="Helical" evidence="12">
    <location>
        <begin position="844"/>
        <end position="863"/>
    </location>
</feature>
<feature type="topological domain" description="Lumenal" evidence="12">
    <location>
        <begin position="864"/>
        <end position="886"/>
    </location>
</feature>
<feature type="transmembrane region" description="Helical" evidence="12">
    <location>
        <begin position="887"/>
        <end position="907"/>
    </location>
</feature>
<feature type="topological domain" description="Cytoplasmic" evidence="12">
    <location>
        <begin position="908"/>
        <end position="1662"/>
    </location>
</feature>
<feature type="transmembrane region" description="Helical" evidence="13">
    <location>
        <begin position="1663"/>
        <end position="1683"/>
    </location>
</feature>
<feature type="topological domain" description="Cytoplasmic" evidence="13">
    <location>
        <begin position="1684"/>
        <end position="1810"/>
    </location>
</feature>
<feature type="transmembrane region" description="Helical" evidence="13">
    <location>
        <begin position="1811"/>
        <end position="1829"/>
    </location>
</feature>
<feature type="topological domain" description="Lumenal" evidence="5">
    <location>
        <begin position="1830"/>
        <end position="1833"/>
    </location>
</feature>
<feature type="transmembrane region" description="Helical" evidence="13">
    <location>
        <begin position="1834"/>
        <end position="1854"/>
    </location>
</feature>
<feature type="topological domain" description="Cytoplasmic" evidence="13">
    <location>
        <position position="1855"/>
    </location>
</feature>
<feature type="transmembrane region" description="Helical" evidence="13">
    <location>
        <begin position="1856"/>
        <end position="1876"/>
    </location>
</feature>
<feature type="topological domain" description="Lumenal" evidence="13">
    <location>
        <begin position="1877"/>
        <end position="1886"/>
    </location>
</feature>
<feature type="transmembrane region" description="Helical" evidence="13">
    <location>
        <begin position="1887"/>
        <end position="1907"/>
    </location>
</feature>
<feature type="topological domain" description="Cytoplasmic" evidence="13">
    <location>
        <begin position="1908"/>
        <end position="1977"/>
    </location>
</feature>
<feature type="intramembrane region" evidence="5">
    <location>
        <begin position="1978"/>
        <end position="2007"/>
    </location>
</feature>
<feature type="topological domain" description="Cytoplasmic" evidence="5">
    <location>
        <begin position="2008"/>
        <end position="2998"/>
    </location>
</feature>
<feature type="transmembrane region" description="Helical" evidence="5">
    <location>
        <begin position="2999"/>
        <end position="3019"/>
    </location>
</feature>
<feature type="domain" description="Peptidase C18" evidence="17">
    <location>
        <begin position="908"/>
        <end position="1031"/>
    </location>
</feature>
<feature type="domain" description="Peptidase S29" evidence="18">
    <location>
        <begin position="1032"/>
        <end position="1213"/>
    </location>
</feature>
<feature type="domain" description="Helicase C-terminal" evidence="16">
    <location>
        <begin position="1366"/>
        <end position="1543"/>
    </location>
</feature>
<feature type="domain" description="RdRp catalytic" evidence="14">
    <location>
        <begin position="2642"/>
        <end position="2760"/>
    </location>
</feature>
<feature type="region of interest" description="Disordered" evidence="5">
    <location>
        <begin position="2"/>
        <end position="75"/>
    </location>
</feature>
<feature type="region of interest" description="Interaction with DDX3X" evidence="9">
    <location>
        <begin position="2"/>
        <end position="59"/>
    </location>
</feature>
<feature type="region of interest" description="Interaction with EIF2AK2/PKR" evidence="2">
    <location>
        <begin position="2"/>
        <end position="58"/>
    </location>
</feature>
<feature type="region of interest" description="Interaction with STAT1" evidence="2">
    <location>
        <begin position="2"/>
        <end position="23"/>
    </location>
</feature>
<feature type="region of interest" description="Important for endoplasmic reticulum and mitochondrial localization" evidence="2">
    <location>
        <begin position="112"/>
        <end position="152"/>
    </location>
</feature>
<feature type="region of interest" description="Interaction with APOA2" evidence="6">
    <location>
        <begin position="122"/>
        <end position="173"/>
    </location>
</feature>
<feature type="region of interest" description="Important for lipid droplets localization" evidence="5">
    <location>
        <begin position="164"/>
        <end position="167"/>
    </location>
</feature>
<feature type="region of interest" description="Important for fusion" evidence="5">
    <location>
        <begin position="265"/>
        <end position="296"/>
    </location>
</feature>
<feature type="region of interest" description="HVR1" evidence="5">
    <location>
        <begin position="385"/>
        <end position="412"/>
    </location>
</feature>
<feature type="region of interest" description="HVR2" evidence="5">
    <location>
        <begin position="475"/>
        <end position="479"/>
    </location>
</feature>
<feature type="region of interest" description="CD81-binding 1" evidence="3">
    <location>
        <begin position="481"/>
        <end position="494"/>
    </location>
</feature>
<feature type="region of interest" description="CD81-binding 2" evidence="3">
    <location>
        <begin position="545"/>
        <end position="552"/>
    </location>
</feature>
<feature type="region of interest" description="PKR/eIF2-alpha phosphorylation homology domain (PePHD)">
    <location>
        <begin position="665"/>
        <end position="676"/>
    </location>
</feature>
<feature type="region of interest" description="Protease NS2-3" evidence="3">
    <location>
        <begin position="909"/>
        <end position="1211"/>
    </location>
</feature>
<feature type="region of interest" description="Interaction with host SCPS1" evidence="11">
    <location>
        <begin position="934"/>
        <end position="954"/>
    </location>
</feature>
<feature type="region of interest" description="Disordered" evidence="19">
    <location>
        <begin position="1482"/>
        <end position="1505"/>
    </location>
</feature>
<feature type="region of interest" description="RNA-binding" evidence="3">
    <location>
        <begin position="1491"/>
        <end position="1503"/>
    </location>
</feature>
<feature type="region of interest" description="NS3-binding" evidence="5">
    <location>
        <begin position="1684"/>
        <end position="1695"/>
    </location>
</feature>
<feature type="region of interest" description="Transcriptional activation" evidence="13">
    <location>
        <begin position="2125"/>
        <end position="2337"/>
    </location>
</feature>
<feature type="region of interest" description="FKBP8-binding" evidence="2">
    <location>
        <begin position="2125"/>
        <end position="2213"/>
    </location>
</feature>
<feature type="region of interest" description="Interaction with non-structural protein 4A" evidence="2">
    <location>
        <begin position="2140"/>
        <end position="2144"/>
    </location>
</feature>
<feature type="region of interest" description="Disordered" evidence="19">
    <location>
        <begin position="2191"/>
        <end position="2225"/>
    </location>
</feature>
<feature type="region of interest" description="Interaction with host SKP2" evidence="5">
    <location>
        <begin position="2194"/>
        <end position="2446"/>
    </location>
</feature>
<feature type="region of interest" description="Interaction with EIF2AK2/PKR" evidence="3">
    <location>
        <begin position="2215"/>
        <end position="2280"/>
    </location>
</feature>
<feature type="region of interest" description="ISDR" evidence="2">
    <location>
        <begin position="2215"/>
        <end position="2254"/>
    </location>
</feature>
<feature type="region of interest" description="NS4B-binding" evidence="13">
    <location>
        <begin position="2254"/>
        <end position="2311"/>
    </location>
</feature>
<feature type="region of interest" description="V3">
    <location>
        <begin position="2304"/>
        <end position="2382"/>
    </location>
</feature>
<feature type="region of interest" description="Disordered" evidence="19">
    <location>
        <begin position="2356"/>
        <end position="2417"/>
    </location>
</feature>
<feature type="short sequence motif" description="Nuclear localization signal" evidence="11">
    <location>
        <begin position="5"/>
        <end position="13"/>
    </location>
</feature>
<feature type="short sequence motif" description="Nuclear localization signal" evidence="11">
    <location>
        <begin position="38"/>
        <end position="43"/>
    </location>
</feature>
<feature type="short sequence motif" description="Nuclear localization signal" evidence="11">
    <location>
        <begin position="58"/>
        <end position="64"/>
    </location>
</feature>
<feature type="short sequence motif" description="Nuclear localization signal" evidence="11">
    <location>
        <begin position="66"/>
        <end position="71"/>
    </location>
</feature>
<feature type="short sequence motif" description="DECH box" evidence="11">
    <location>
        <begin position="1321"/>
        <end position="1324"/>
    </location>
</feature>
<feature type="short sequence motif" description="SH3-binding" evidence="13">
    <location>
        <begin position="2327"/>
        <end position="2330"/>
    </location>
</feature>
<feature type="short sequence motif" description="Nuclear localization signal" evidence="2">
    <location>
        <begin position="2332"/>
        <end position="2340"/>
    </location>
</feature>
<feature type="compositionally biased region" description="Basic residues" evidence="19">
    <location>
        <begin position="58"/>
        <end position="68"/>
    </location>
</feature>
<feature type="compositionally biased region" description="Low complexity" evidence="19">
    <location>
        <begin position="2199"/>
        <end position="2215"/>
    </location>
</feature>
<feature type="compositionally biased region" description="Polar residues" evidence="19">
    <location>
        <begin position="2369"/>
        <end position="2381"/>
    </location>
</feature>
<feature type="active site" description="For protease NS2 activity; shared with dimeric partner" evidence="17">
    <location>
        <position position="957"/>
    </location>
</feature>
<feature type="active site" description="For protease NS2 activity; shared with dimeric partner" evidence="17">
    <location>
        <position position="977"/>
    </location>
</feature>
<feature type="active site" description="For protease NS2 activity; shared with dimeric partner" evidence="17">
    <location>
        <position position="998"/>
    </location>
</feature>
<feature type="active site" description="Charge relay system; for serine protease NS3 activity" evidence="18">
    <location>
        <position position="1088"/>
    </location>
</feature>
<feature type="active site" description="Charge relay system; for serine protease NS3 activity" evidence="18">
    <location>
        <position position="1112"/>
    </location>
</feature>
<feature type="active site" description="Charge relay system; for serine protease NS3 activity" evidence="18">
    <location>
        <position position="1170"/>
    </location>
</feature>
<feature type="binding site" evidence="18">
    <location>
        <position position="1128"/>
    </location>
    <ligand>
        <name>Zn(2+)</name>
        <dbReference type="ChEBI" id="CHEBI:29105"/>
        <label>1</label>
        <note>structural; for NS3 protease activity and NS2/3 auto-cleavage activity</note>
    </ligand>
</feature>
<feature type="binding site" evidence="18">
    <location>
        <position position="1130"/>
    </location>
    <ligand>
        <name>Zn(2+)</name>
        <dbReference type="ChEBI" id="CHEBI:29105"/>
        <label>1</label>
        <note>structural; for NS3 protease activity and NS2/3 auto-cleavage activity</note>
    </ligand>
</feature>
<feature type="binding site" evidence="18">
    <location>
        <position position="1176"/>
    </location>
    <ligand>
        <name>Zn(2+)</name>
        <dbReference type="ChEBI" id="CHEBI:29105"/>
        <label>1</label>
        <note>structural; for NS3 protease activity and NS2/3 auto-cleavage activity</note>
    </ligand>
</feature>
<feature type="binding site" evidence="18">
    <location>
        <position position="1180"/>
    </location>
    <ligand>
        <name>Zn(2+)</name>
        <dbReference type="ChEBI" id="CHEBI:29105"/>
        <label>1</label>
        <note>structural; for NS3 protease activity and NS2/3 auto-cleavage activity</note>
    </ligand>
</feature>
<feature type="binding site" evidence="15">
    <location>
        <begin position="1235"/>
        <end position="1242"/>
    </location>
    <ligand>
        <name>ATP</name>
        <dbReference type="ChEBI" id="CHEBI:30616"/>
    </ligand>
</feature>
<feature type="binding site" evidence="12">
    <location>
        <position position="1242"/>
    </location>
    <ligand>
        <name>Mg(2+)</name>
        <dbReference type="ChEBI" id="CHEBI:18420"/>
        <label>1</label>
        <note>catalytic; for NS3 helicase activity</note>
    </ligand>
</feature>
<feature type="binding site" evidence="12">
    <location>
        <position position="1322"/>
    </location>
    <ligand>
        <name>Mg(2+)</name>
        <dbReference type="ChEBI" id="CHEBI:18420"/>
        <label>1</label>
        <note>catalytic; for NS3 helicase activity</note>
    </ligand>
</feature>
<feature type="binding site" evidence="12">
    <location>
        <position position="2016"/>
    </location>
    <ligand>
        <name>Zn(2+)</name>
        <dbReference type="ChEBI" id="CHEBI:29105"/>
        <label>2</label>
        <note>structural</note>
    </ligand>
</feature>
<feature type="binding site" evidence="12">
    <location>
        <position position="2034"/>
    </location>
    <ligand>
        <name>Zn(2+)</name>
        <dbReference type="ChEBI" id="CHEBI:29105"/>
        <label>2</label>
        <note>structural</note>
    </ligand>
</feature>
<feature type="binding site" evidence="12">
    <location>
        <position position="2036"/>
    </location>
    <ligand>
        <name>Zn(2+)</name>
        <dbReference type="ChEBI" id="CHEBI:29105"/>
        <label>2</label>
        <note>structural</note>
    </ligand>
</feature>
<feature type="binding site" evidence="12">
    <location>
        <position position="2057"/>
    </location>
    <ligand>
        <name>Zn(2+)</name>
        <dbReference type="ChEBI" id="CHEBI:29105"/>
        <label>2</label>
        <note>structural</note>
    </ligand>
</feature>
<feature type="binding site" evidence="3">
    <location>
        <position position="2648"/>
    </location>
    <ligand>
        <name>Mg(2+)</name>
        <dbReference type="ChEBI" id="CHEBI:18420"/>
        <label>2</label>
        <note>catalytic; for RNA-directed RNA polymerase activity</note>
    </ligand>
</feature>
<feature type="binding site" evidence="3">
    <location>
        <position position="2746"/>
    </location>
    <ligand>
        <name>Mg(2+)</name>
        <dbReference type="ChEBI" id="CHEBI:18420"/>
        <label>2</label>
        <note>catalytic; for RNA-directed RNA polymerase activity</note>
    </ligand>
</feature>
<feature type="binding site" evidence="3">
    <location>
        <position position="2747"/>
    </location>
    <ligand>
        <name>Mg(2+)</name>
        <dbReference type="ChEBI" id="CHEBI:18420"/>
        <label>2</label>
        <note>catalytic; for RNA-directed RNA polymerase activity</note>
    </ligand>
</feature>
<feature type="site" description="Cleavage; by host signal peptide peptidase" evidence="2">
    <location>
        <begin position="177"/>
        <end position="178"/>
    </location>
</feature>
<feature type="site" description="Cleavage; by host signal peptidase" evidence="2">
    <location>
        <begin position="191"/>
        <end position="192"/>
    </location>
</feature>
<feature type="site" description="Cleavage; by host signal peptidase" evidence="2">
    <location>
        <begin position="383"/>
        <end position="384"/>
    </location>
</feature>
<feature type="site" description="Cleavage; by host signal peptidase">
    <location>
        <begin position="751"/>
        <end position="752"/>
    </location>
</feature>
<feature type="site" description="Cleavage; by host signal peptidase">
    <location>
        <begin position="814"/>
        <end position="815"/>
    </location>
</feature>
<feature type="site" description="Cleavage; by protease NS2" evidence="17">
    <location>
        <begin position="1031"/>
        <end position="1032"/>
    </location>
</feature>
<feature type="site" description="Cleavage; by serine protease NS3" evidence="5">
    <location>
        <begin position="1662"/>
        <end position="1663"/>
    </location>
</feature>
<feature type="site" description="Cleavage; by serine protease NS3" evidence="5">
    <location>
        <begin position="1716"/>
        <end position="1717"/>
    </location>
</feature>
<feature type="site" description="Cleavage; by serine protease NS3" evidence="5">
    <location>
        <begin position="1977"/>
        <end position="1978"/>
    </location>
</feature>
<feature type="site" description="Cleavage; by serine protease NS3" evidence="5">
    <location>
        <begin position="2428"/>
        <end position="2429"/>
    </location>
</feature>
<feature type="modified residue" description="N-acetylserine; by host" evidence="10">
    <location>
        <position position="2"/>
    </location>
</feature>
<feature type="modified residue" description="Phosphoserine; by host" evidence="7">
    <location>
        <position position="53"/>
    </location>
</feature>
<feature type="modified residue" description="Phosphoserine; by host" evidence="7">
    <location>
        <position position="99"/>
    </location>
</feature>
<feature type="modified residue" description="Phosphoserine; by host" evidence="7">
    <location>
        <position position="116"/>
    </location>
</feature>
<feature type="modified residue" description="Phosphoserine; by host" evidence="12">
    <location>
        <position position="2199"/>
    </location>
</feature>
<feature type="modified residue" description="Phosphoserine; by host" evidence="12">
    <location>
        <position position="2202"/>
    </location>
</feature>
<feature type="modified residue" description="Phosphoserine; by host" evidence="12">
    <location>
        <position position="2206"/>
    </location>
</feature>
<feature type="modified residue" description="Phosphoserine; by host" evidence="12">
    <location>
        <position position="2209"/>
    </location>
</feature>
<feature type="modified residue" description="Phosphoserine; by host" evidence="11">
    <location>
        <position position="2212"/>
    </location>
</feature>
<feature type="modified residue" description="Phosphoserine; by host" evidence="11">
    <location>
        <position position="2215"/>
    </location>
</feature>
<feature type="modified residue" description="Phosphoserine; by host" evidence="2">
    <location>
        <position position="2457"/>
    </location>
</feature>
<feature type="modified residue" description="Phosphoserine; by host" evidence="2">
    <location>
        <position position="2470"/>
    </location>
</feature>
<feature type="lipid moiety-binding region" description="S-palmitoyl cysteine; by host" evidence="5">
    <location>
        <position position="927"/>
    </location>
</feature>
<feature type="lipid moiety-binding region" description="S-palmitoyl cysteine; by host" evidence="5">
    <location>
        <position position="1977"/>
    </location>
</feature>
<feature type="glycosylation site" description="N-linked (GlcNAc...) asparagine; by host" evidence="5">
    <location>
        <position position="196"/>
    </location>
</feature>
<feature type="glycosylation site" description="N-linked (GlcNAc...) asparagine; by host" evidence="5">
    <location>
        <position position="209"/>
    </location>
</feature>
<feature type="glycosylation site" description="N-linked (GlcNAc...) asparagine; by host" evidence="5">
    <location>
        <position position="234"/>
    </location>
</feature>
<feature type="glycosylation site" description="N-linked (GlcNAc...) asparagine; by host" evidence="5">
    <location>
        <position position="305"/>
    </location>
</feature>
<feature type="glycosylation site" description="N-linked (GlcNAc...) (high mannose) asparagine; by host" evidence="5">
    <location>
        <position position="417"/>
    </location>
</feature>
<feature type="glycosylation site" description="N-linked (GlcNAc...) (high mannose) asparagine; by host" evidence="5">
    <location>
        <position position="423"/>
    </location>
</feature>
<feature type="glycosylation site" description="N-linked (GlcNAc...) (high mannose) asparagine; by host" evidence="5">
    <location>
        <position position="430"/>
    </location>
</feature>
<feature type="glycosylation site" description="N-linked (GlcNAc...) asparagine; by host" evidence="13">
    <location>
        <position position="448"/>
    </location>
</feature>
<feature type="glycosylation site" description="N-linked (GlcNAc...) asparagine; by host" evidence="13">
    <location>
        <position position="476"/>
    </location>
</feature>
<feature type="glycosylation site" description="N-linked (GlcNAc...) asparagine; by host" evidence="13">
    <location>
        <position position="533"/>
    </location>
</feature>
<feature type="glycosylation site" description="N-linked (GlcNAc...) asparagine; by host" evidence="13">
    <location>
        <position position="557"/>
    </location>
</feature>
<feature type="glycosylation site" description="N-linked (GlcNAc...) (high mannose) asparagine; by host" evidence="5">
    <location>
        <position position="628"/>
    </location>
</feature>
<feature type="glycosylation site" description="N-linked (GlcNAc...) (high mannose) asparagine; by host" evidence="5">
    <location>
        <position position="650"/>
    </location>
</feature>
<feature type="disulfide bond" evidence="5">
    <location>
        <begin position="429"/>
        <end position="553"/>
    </location>
</feature>
<feature type="disulfide bond" evidence="5">
    <location>
        <begin position="452"/>
        <end position="459"/>
    </location>
</feature>
<feature type="disulfide bond" evidence="5">
    <location>
        <begin position="487"/>
        <end position="495"/>
    </location>
</feature>
<feature type="disulfide bond" evidence="5">
    <location>
        <begin position="504"/>
        <end position="509"/>
    </location>
</feature>
<feature type="disulfide bond" evidence="5">
    <location>
        <begin position="565"/>
        <end position="570"/>
    </location>
</feature>
<feature type="disulfide bond" evidence="5">
    <location>
        <begin position="586"/>
        <end position="590"/>
    </location>
</feature>
<feature type="disulfide bond" evidence="5">
    <location>
        <begin position="602"/>
        <end position="625"/>
    </location>
</feature>
<feature type="disulfide bond" evidence="5">
    <location>
        <begin position="612"/>
        <end position="649"/>
    </location>
</feature>
<feature type="disulfide bond" evidence="5">
    <location>
        <begin position="657"/>
        <end position="682"/>
    </location>
</feature>
<feature type="cross-link" description="Glycyl lysine isopeptide (Lys-Gly) (interchain with G-Cter in ubiquitin)" evidence="5">
    <location>
        <position position="2355"/>
    </location>
</feature>
<organism>
    <name type="scientific">Hepatitis C virus genotype 3k (isolate JK049)</name>
    <name type="common">HCV</name>
    <dbReference type="NCBI Taxonomy" id="356417"/>
    <lineage>
        <taxon>Viruses</taxon>
        <taxon>Riboviria</taxon>
        <taxon>Orthornavirae</taxon>
        <taxon>Kitrinoviricota</taxon>
        <taxon>Flasuviricetes</taxon>
        <taxon>Amarillovirales</taxon>
        <taxon>Flaviviridae</taxon>
        <taxon>Hepacivirus</taxon>
        <taxon>Hepacivirus hominis</taxon>
    </lineage>
</organism>